<proteinExistence type="evidence at protein level"/>
<feature type="chain" id="PRO_0000086249" description="Mitogen-activated protein kinase kinase kinase 5">
    <location>
        <begin position="1"/>
        <end position="1374"/>
    </location>
</feature>
<feature type="domain" description="Protein kinase" evidence="3">
    <location>
        <begin position="680"/>
        <end position="938"/>
    </location>
</feature>
<feature type="region of interest" description="Disordered" evidence="5">
    <location>
        <begin position="68"/>
        <end position="87"/>
    </location>
</feature>
<feature type="region of interest" description="Interaction with PPIA/CYPA" evidence="43">
    <location>
        <begin position="649"/>
        <end position="1374"/>
    </location>
</feature>
<feature type="region of interest" description="Disordered" evidence="5">
    <location>
        <begin position="1182"/>
        <end position="1209"/>
    </location>
</feature>
<feature type="coiled-coil region" evidence="2">
    <location>
        <begin position="1245"/>
        <end position="1285"/>
    </location>
</feature>
<feature type="compositionally biased region" description="Low complexity" evidence="5">
    <location>
        <begin position="69"/>
        <end position="81"/>
    </location>
</feature>
<feature type="compositionally biased region" description="Acidic residues" evidence="5">
    <location>
        <begin position="1185"/>
        <end position="1199"/>
    </location>
</feature>
<feature type="active site" description="Proton acceptor" evidence="3 4">
    <location>
        <position position="803"/>
    </location>
</feature>
<feature type="binding site" evidence="3">
    <location>
        <begin position="686"/>
        <end position="694"/>
    </location>
    <ligand>
        <name>ATP</name>
        <dbReference type="ChEBI" id="CHEBI:30616"/>
    </ligand>
</feature>
<feature type="binding site">
    <location>
        <position position="709"/>
    </location>
    <ligand>
        <name>ATP</name>
        <dbReference type="ChEBI" id="CHEBI:30616"/>
    </ligand>
</feature>
<feature type="modified residue" description="Asymmetric dimethylarginine; by PRMT1" evidence="40">
    <location>
        <position position="78"/>
    </location>
</feature>
<feature type="modified residue" description="Asymmetric dimethylarginine; by PRMT1" evidence="40">
    <location>
        <position position="80"/>
    </location>
</feature>
<feature type="modified residue" description="Phosphoserine; by PIM1 and PKB/AKT1" evidence="11 38">
    <location>
        <position position="83"/>
    </location>
</feature>
<feature type="modified residue" description="Phosphotyrosine" evidence="27">
    <location>
        <position position="718"/>
    </location>
</feature>
<feature type="modified residue" description="Phosphothreonine; by autocatalysis" evidence="34">
    <location>
        <position position="813"/>
    </location>
</feature>
<feature type="modified residue" description="Phosphothreonine; by autocatalysis, MELK and MAP3K6" evidence="15 28 34 36 37 41">
    <location>
        <position position="838"/>
    </location>
</feature>
<feature type="modified residue" description="Phosphothreonine; by autocatalysis" evidence="34">
    <location>
        <position position="842"/>
    </location>
</feature>
<feature type="modified residue" description="Phosphoserine" evidence="56">
    <location>
        <position position="958"/>
    </location>
</feature>
<feature type="modified residue" description="Phosphoserine; by autocatalysis" evidence="19 22 37 43">
    <location>
        <position position="966"/>
    </location>
</feature>
<feature type="modified residue" description="Phosphoserine" evidence="53 54">
    <location>
        <position position="1029"/>
    </location>
</feature>
<feature type="modified residue" description="Phosphoserine" evidence="22 37 53 54 55">
    <location>
        <position position="1033"/>
    </location>
</feature>
<feature type="splice variant" id="VSP_056182" description="In isoform 2." evidence="50">
    <location>
        <begin position="1"/>
        <end position="753"/>
    </location>
</feature>
<feature type="sequence variant" id="VAR_040693" description="In dbSNP:rs45626535." evidence="30">
    <original>G</original>
    <variation>R</variation>
    <location>
        <position position="1006"/>
    </location>
</feature>
<feature type="sequence variant" id="VAR_040694" description="In dbSNP:rs56379668." evidence="30">
    <original>I</original>
    <variation>T</variation>
    <location>
        <position position="1214"/>
    </location>
</feature>
<feature type="sequence variant" id="VAR_040695" description="In dbSNP:rs35551087." evidence="30">
    <original>I</original>
    <variation>V</variation>
    <location>
        <position position="1250"/>
    </location>
</feature>
<feature type="sequence variant" id="VAR_040696" description="In dbSNP:rs45599539." evidence="30">
    <original>T</original>
    <variation>I</variation>
    <location>
        <position position="1314"/>
    </location>
</feature>
<feature type="sequence variant" id="VAR_040697" description="In dbSNP:rs41288957." evidence="30">
    <original>D</original>
    <variation>N</variation>
    <location>
        <position position="1315"/>
    </location>
</feature>
<feature type="mutagenesis site" description="No effect on methylation by PRMT1." evidence="40">
    <original>R</original>
    <variation>K</variation>
    <location>
        <position position="32"/>
    </location>
</feature>
<feature type="mutagenesis site" description="Reduced methylation by PRMT1. Abolishes methylation by PRMT1 and PRMT1-mediated inhibition of MAPK35 activation; when associated with K-80." evidence="40">
    <original>R</original>
    <variation>K</variation>
    <location>
        <position position="78"/>
    </location>
</feature>
<feature type="mutagenesis site" description="Reduced methylation by PRMT1. Abolishes methylation by PRMT1 and PRMT1-mediated inhibition of MAPK35 activation; when associated with K-78." evidence="40">
    <original>R</original>
    <variation>K</variation>
    <location>
        <position position="80"/>
    </location>
</feature>
<feature type="mutagenesis site" description="Loss of kinase activity. Inhibits activation of JNK and apoptosis mediated by TNFRSF6 and DAXX. Does not affect interaction with TRIM48." evidence="28 44 48">
    <original>K</original>
    <variation>M</variation>
    <location>
        <position position="709"/>
    </location>
</feature>
<feature type="mutagenesis site" description="Loss of kinase activity. Abolishes DAXX-mediated apoptosis. Loss of RC3H2-mediated ubiquitination." evidence="28 42 48">
    <original>K</original>
    <variation>R</variation>
    <location>
        <position position="709"/>
    </location>
</feature>
<feature type="mutagenesis site" description="Does not affect interaction with TRIM48." evidence="44">
    <original>T</original>
    <variation>A</variation>
    <location>
        <position position="838"/>
    </location>
</feature>
<feature type="mutagenesis site" description="Enhanced induction of apoptosis, increased kinase activity, and loss of YWHAG binding." evidence="6 22">
    <original>S</original>
    <variation>A</variation>
    <location>
        <position position="966"/>
    </location>
</feature>
<feature type="mutagenesis site" description="Enhanced induction of apoptosis and increased kinase activity." evidence="22">
    <original>S</original>
    <variation>A</variation>
    <location>
        <position position="1033"/>
    </location>
</feature>
<feature type="helix" evidence="59">
    <location>
        <begin position="273"/>
        <end position="286"/>
    </location>
</feature>
<feature type="helix" evidence="59">
    <location>
        <begin position="289"/>
        <end position="303"/>
    </location>
</feature>
<feature type="helix" evidence="59">
    <location>
        <begin position="311"/>
        <end position="323"/>
    </location>
</feature>
<feature type="helix" evidence="59">
    <location>
        <begin position="327"/>
        <end position="339"/>
    </location>
</feature>
<feature type="helix" evidence="59">
    <location>
        <begin position="345"/>
        <end position="347"/>
    </location>
</feature>
<feature type="helix" evidence="59">
    <location>
        <begin position="349"/>
        <end position="362"/>
    </location>
</feature>
<feature type="helix" evidence="59">
    <location>
        <begin position="367"/>
        <end position="379"/>
    </location>
</feature>
<feature type="helix" evidence="59">
    <location>
        <begin position="387"/>
        <end position="403"/>
    </location>
</feature>
<feature type="turn" evidence="59">
    <location>
        <begin position="404"/>
        <end position="406"/>
    </location>
</feature>
<feature type="helix" evidence="59">
    <location>
        <begin position="409"/>
        <end position="425"/>
    </location>
</feature>
<feature type="helix" evidence="59">
    <location>
        <begin position="429"/>
        <end position="441"/>
    </location>
</feature>
<feature type="helix" evidence="59">
    <location>
        <begin position="452"/>
        <end position="466"/>
    </location>
</feature>
<feature type="helix" evidence="59">
    <location>
        <begin position="469"/>
        <end position="471"/>
    </location>
</feature>
<feature type="helix" evidence="59">
    <location>
        <begin position="475"/>
        <end position="487"/>
    </location>
</feature>
<feature type="helix" evidence="59">
    <location>
        <begin position="491"/>
        <end position="503"/>
    </location>
</feature>
<feature type="helix" evidence="59">
    <location>
        <begin position="508"/>
        <end position="524"/>
    </location>
</feature>
<feature type="helix" evidence="59">
    <location>
        <begin position="536"/>
        <end position="548"/>
    </location>
</feature>
<feature type="strand" evidence="59">
    <location>
        <begin position="557"/>
        <end position="564"/>
    </location>
</feature>
<feature type="strand" evidence="59">
    <location>
        <begin position="570"/>
        <end position="578"/>
    </location>
</feature>
<feature type="strand" evidence="59">
    <location>
        <begin position="581"/>
        <end position="583"/>
    </location>
</feature>
<feature type="strand" evidence="59">
    <location>
        <begin position="585"/>
        <end position="592"/>
    </location>
</feature>
<feature type="strand" evidence="59">
    <location>
        <begin position="601"/>
        <end position="605"/>
    </location>
</feature>
<feature type="helix" evidence="59">
    <location>
        <begin position="606"/>
        <end position="608"/>
    </location>
</feature>
<feature type="strand" evidence="59">
    <location>
        <begin position="609"/>
        <end position="614"/>
    </location>
</feature>
<feature type="strand" evidence="59">
    <location>
        <begin position="621"/>
        <end position="626"/>
    </location>
</feature>
<feature type="strand" evidence="59">
    <location>
        <begin position="633"/>
        <end position="636"/>
    </location>
</feature>
<feature type="helix" evidence="59">
    <location>
        <begin position="640"/>
        <end position="654"/>
    </location>
</feature>
<feature type="strand" evidence="62">
    <location>
        <begin position="673"/>
        <end position="675"/>
    </location>
</feature>
<feature type="strand" evidence="57">
    <location>
        <begin position="681"/>
        <end position="683"/>
    </location>
</feature>
<feature type="strand" evidence="62">
    <location>
        <begin position="685"/>
        <end position="688"/>
    </location>
</feature>
<feature type="strand" evidence="62">
    <location>
        <begin position="690"/>
        <end position="699"/>
    </location>
</feature>
<feature type="turn" evidence="62">
    <location>
        <begin position="700"/>
        <end position="702"/>
    </location>
</feature>
<feature type="strand" evidence="62">
    <location>
        <begin position="705"/>
        <end position="712"/>
    </location>
</feature>
<feature type="turn" evidence="63">
    <location>
        <begin position="716"/>
        <end position="718"/>
    </location>
</feature>
<feature type="helix" evidence="62">
    <location>
        <begin position="719"/>
        <end position="729"/>
    </location>
</feature>
<feature type="strand" evidence="62">
    <location>
        <begin position="740"/>
        <end position="746"/>
    </location>
</feature>
<feature type="strand" evidence="62">
    <location>
        <begin position="749"/>
        <end position="755"/>
    </location>
</feature>
<feature type="strand" evidence="58">
    <location>
        <begin position="758"/>
        <end position="761"/>
    </location>
</feature>
<feature type="helix" evidence="62">
    <location>
        <begin position="762"/>
        <end position="768"/>
    </location>
</feature>
<feature type="turn" evidence="60">
    <location>
        <begin position="774"/>
        <end position="776"/>
    </location>
</feature>
<feature type="helix" evidence="62">
    <location>
        <begin position="777"/>
        <end position="796"/>
    </location>
</feature>
<feature type="helix" evidence="62">
    <location>
        <begin position="806"/>
        <end position="808"/>
    </location>
</feature>
<feature type="strand" evidence="62">
    <location>
        <begin position="809"/>
        <end position="811"/>
    </location>
</feature>
<feature type="turn" evidence="62">
    <location>
        <begin position="813"/>
        <end position="815"/>
    </location>
</feature>
<feature type="strand" evidence="62">
    <location>
        <begin position="818"/>
        <end position="820"/>
    </location>
</feature>
<feature type="turn" evidence="57">
    <location>
        <begin position="823"/>
        <end position="825"/>
    </location>
</feature>
<feature type="strand" evidence="57">
    <location>
        <begin position="827"/>
        <end position="829"/>
    </location>
</feature>
<feature type="strand" evidence="61">
    <location>
        <begin position="832"/>
        <end position="835"/>
    </location>
</feature>
<feature type="helix" evidence="62">
    <location>
        <begin position="843"/>
        <end position="845"/>
    </location>
</feature>
<feature type="helix" evidence="62">
    <location>
        <begin position="848"/>
        <end position="851"/>
    </location>
</feature>
<feature type="helix" evidence="58">
    <location>
        <begin position="854"/>
        <end position="857"/>
    </location>
</feature>
<feature type="helix" evidence="62">
    <location>
        <begin position="861"/>
        <end position="876"/>
    </location>
</feature>
<feature type="helix" evidence="62">
    <location>
        <begin position="882"/>
        <end position="884"/>
    </location>
</feature>
<feature type="helix" evidence="62">
    <location>
        <begin position="887"/>
        <end position="897"/>
    </location>
</feature>
<feature type="helix" evidence="62">
    <location>
        <begin position="909"/>
        <end position="918"/>
    </location>
</feature>
<feature type="turn" evidence="62">
    <location>
        <begin position="923"/>
        <end position="925"/>
    </location>
</feature>
<feature type="helix" evidence="62">
    <location>
        <begin position="929"/>
        <end position="933"/>
    </location>
</feature>
<feature type="helix" evidence="58">
    <location>
        <begin position="936"/>
        <end position="938"/>
    </location>
</feature>
<reference key="1">
    <citation type="journal article" date="1996" name="J. Biol. Chem.">
        <title>Molecular cloning and characterization of a novel protein kinase with a catalytic domain homologous to mitogen-activated protein kinase kinase kinase.</title>
        <authorList>
            <person name="Wang X.S."/>
            <person name="Diener K."/>
            <person name="Jannuzzi D."/>
            <person name="Trollinger D."/>
            <person name="Tan T.-H."/>
            <person name="Lichenstein H."/>
            <person name="Zukowski M."/>
            <person name="Yao Z."/>
        </authorList>
    </citation>
    <scope>NUCLEOTIDE SEQUENCE [MRNA] (ISOFORM 1)</scope>
    <scope>FUNCTION</scope>
</reference>
<reference key="2">
    <citation type="journal article" date="1997" name="Science">
        <title>Induction of apoptosis by ASK1, a mammalian MAPKKK that activates SAPK/JNK and p38 signaling pathways.</title>
        <authorList>
            <person name="Ichijo H."/>
            <person name="Nishida E."/>
            <person name="Irie K."/>
            <person name="ten Dijke P."/>
            <person name="Saitoh M."/>
            <person name="Moriguchi T."/>
            <person name="Takagi M."/>
            <person name="Matsumoto K."/>
            <person name="Miyazono K."/>
            <person name="Gotoh Y."/>
        </authorList>
    </citation>
    <scope>NUCLEOTIDE SEQUENCE [MRNA] (ISOFORM 1)</scope>
    <scope>FUNCTION</scope>
</reference>
<reference key="3">
    <citation type="journal article" date="2004" name="Nat. Genet.">
        <title>Complete sequencing and characterization of 21,243 full-length human cDNAs.</title>
        <authorList>
            <person name="Ota T."/>
            <person name="Suzuki Y."/>
            <person name="Nishikawa T."/>
            <person name="Otsuki T."/>
            <person name="Sugiyama T."/>
            <person name="Irie R."/>
            <person name="Wakamatsu A."/>
            <person name="Hayashi K."/>
            <person name="Sato H."/>
            <person name="Nagai K."/>
            <person name="Kimura K."/>
            <person name="Makita H."/>
            <person name="Sekine M."/>
            <person name="Obayashi M."/>
            <person name="Nishi T."/>
            <person name="Shibahara T."/>
            <person name="Tanaka T."/>
            <person name="Ishii S."/>
            <person name="Yamamoto J."/>
            <person name="Saito K."/>
            <person name="Kawai Y."/>
            <person name="Isono Y."/>
            <person name="Nakamura Y."/>
            <person name="Nagahari K."/>
            <person name="Murakami K."/>
            <person name="Yasuda T."/>
            <person name="Iwayanagi T."/>
            <person name="Wagatsuma M."/>
            <person name="Shiratori A."/>
            <person name="Sudo H."/>
            <person name="Hosoiri T."/>
            <person name="Kaku Y."/>
            <person name="Kodaira H."/>
            <person name="Kondo H."/>
            <person name="Sugawara M."/>
            <person name="Takahashi M."/>
            <person name="Kanda K."/>
            <person name="Yokoi T."/>
            <person name="Furuya T."/>
            <person name="Kikkawa E."/>
            <person name="Omura Y."/>
            <person name="Abe K."/>
            <person name="Kamihara K."/>
            <person name="Katsuta N."/>
            <person name="Sato K."/>
            <person name="Tanikawa M."/>
            <person name="Yamazaki M."/>
            <person name="Ninomiya K."/>
            <person name="Ishibashi T."/>
            <person name="Yamashita H."/>
            <person name="Murakawa K."/>
            <person name="Fujimori K."/>
            <person name="Tanai H."/>
            <person name="Kimata M."/>
            <person name="Watanabe M."/>
            <person name="Hiraoka S."/>
            <person name="Chiba Y."/>
            <person name="Ishida S."/>
            <person name="Ono Y."/>
            <person name="Takiguchi S."/>
            <person name="Watanabe S."/>
            <person name="Yosida M."/>
            <person name="Hotuta T."/>
            <person name="Kusano J."/>
            <person name="Kanehori K."/>
            <person name="Takahashi-Fujii A."/>
            <person name="Hara H."/>
            <person name="Tanase T.-O."/>
            <person name="Nomura Y."/>
            <person name="Togiya S."/>
            <person name="Komai F."/>
            <person name="Hara R."/>
            <person name="Takeuchi K."/>
            <person name="Arita M."/>
            <person name="Imose N."/>
            <person name="Musashino K."/>
            <person name="Yuuki H."/>
            <person name="Oshima A."/>
            <person name="Sasaki N."/>
            <person name="Aotsuka S."/>
            <person name="Yoshikawa Y."/>
            <person name="Matsunawa H."/>
            <person name="Ichihara T."/>
            <person name="Shiohata N."/>
            <person name="Sano S."/>
            <person name="Moriya S."/>
            <person name="Momiyama H."/>
            <person name="Satoh N."/>
            <person name="Takami S."/>
            <person name="Terashima Y."/>
            <person name="Suzuki O."/>
            <person name="Nakagawa S."/>
            <person name="Senoh A."/>
            <person name="Mizoguchi H."/>
            <person name="Goto Y."/>
            <person name="Shimizu F."/>
            <person name="Wakebe H."/>
            <person name="Hishigaki H."/>
            <person name="Watanabe T."/>
            <person name="Sugiyama A."/>
            <person name="Takemoto M."/>
            <person name="Kawakami B."/>
            <person name="Yamazaki M."/>
            <person name="Watanabe K."/>
            <person name="Kumagai A."/>
            <person name="Itakura S."/>
            <person name="Fukuzumi Y."/>
            <person name="Fujimori Y."/>
            <person name="Komiyama M."/>
            <person name="Tashiro H."/>
            <person name="Tanigami A."/>
            <person name="Fujiwara T."/>
            <person name="Ono T."/>
            <person name="Yamada K."/>
            <person name="Fujii Y."/>
            <person name="Ozaki K."/>
            <person name="Hirao M."/>
            <person name="Ohmori Y."/>
            <person name="Kawabata A."/>
            <person name="Hikiji T."/>
            <person name="Kobatake N."/>
            <person name="Inagaki H."/>
            <person name="Ikema Y."/>
            <person name="Okamoto S."/>
            <person name="Okitani R."/>
            <person name="Kawakami T."/>
            <person name="Noguchi S."/>
            <person name="Itoh T."/>
            <person name="Shigeta K."/>
            <person name="Senba T."/>
            <person name="Matsumura K."/>
            <person name="Nakajima Y."/>
            <person name="Mizuno T."/>
            <person name="Morinaga M."/>
            <person name="Sasaki M."/>
            <person name="Togashi T."/>
            <person name="Oyama M."/>
            <person name="Hata H."/>
            <person name="Watanabe M."/>
            <person name="Komatsu T."/>
            <person name="Mizushima-Sugano J."/>
            <person name="Satoh T."/>
            <person name="Shirai Y."/>
            <person name="Takahashi Y."/>
            <person name="Nakagawa K."/>
            <person name="Okumura K."/>
            <person name="Nagase T."/>
            <person name="Nomura N."/>
            <person name="Kikuchi H."/>
            <person name="Masuho Y."/>
            <person name="Yamashita R."/>
            <person name="Nakai K."/>
            <person name="Yada T."/>
            <person name="Nakamura Y."/>
            <person name="Ohara O."/>
            <person name="Isogai T."/>
            <person name="Sugano S."/>
        </authorList>
    </citation>
    <scope>NUCLEOTIDE SEQUENCE [LARGE SCALE MRNA] (ISOFORM 2)</scope>
    <source>
        <tissue>Amygdala</tissue>
    </source>
</reference>
<reference key="4">
    <citation type="journal article" date="2003" name="Nature">
        <title>The DNA sequence and analysis of human chromosome 6.</title>
        <authorList>
            <person name="Mungall A.J."/>
            <person name="Palmer S.A."/>
            <person name="Sims S.K."/>
            <person name="Edwards C.A."/>
            <person name="Ashurst J.L."/>
            <person name="Wilming L."/>
            <person name="Jones M.C."/>
            <person name="Horton R."/>
            <person name="Hunt S.E."/>
            <person name="Scott C.E."/>
            <person name="Gilbert J.G.R."/>
            <person name="Clamp M.E."/>
            <person name="Bethel G."/>
            <person name="Milne S."/>
            <person name="Ainscough R."/>
            <person name="Almeida J.P."/>
            <person name="Ambrose K.D."/>
            <person name="Andrews T.D."/>
            <person name="Ashwell R.I.S."/>
            <person name="Babbage A.K."/>
            <person name="Bagguley C.L."/>
            <person name="Bailey J."/>
            <person name="Banerjee R."/>
            <person name="Barker D.J."/>
            <person name="Barlow K.F."/>
            <person name="Bates K."/>
            <person name="Beare D.M."/>
            <person name="Beasley H."/>
            <person name="Beasley O."/>
            <person name="Bird C.P."/>
            <person name="Blakey S.E."/>
            <person name="Bray-Allen S."/>
            <person name="Brook J."/>
            <person name="Brown A.J."/>
            <person name="Brown J.Y."/>
            <person name="Burford D.C."/>
            <person name="Burrill W."/>
            <person name="Burton J."/>
            <person name="Carder C."/>
            <person name="Carter N.P."/>
            <person name="Chapman J.C."/>
            <person name="Clark S.Y."/>
            <person name="Clark G."/>
            <person name="Clee C.M."/>
            <person name="Clegg S."/>
            <person name="Cobley V."/>
            <person name="Collier R.E."/>
            <person name="Collins J.E."/>
            <person name="Colman L.K."/>
            <person name="Corby N.R."/>
            <person name="Coville G.J."/>
            <person name="Culley K.M."/>
            <person name="Dhami P."/>
            <person name="Davies J."/>
            <person name="Dunn M."/>
            <person name="Earthrowl M.E."/>
            <person name="Ellington A.E."/>
            <person name="Evans K.A."/>
            <person name="Faulkner L."/>
            <person name="Francis M.D."/>
            <person name="Frankish A."/>
            <person name="Frankland J."/>
            <person name="French L."/>
            <person name="Garner P."/>
            <person name="Garnett J."/>
            <person name="Ghori M.J."/>
            <person name="Gilby L.M."/>
            <person name="Gillson C.J."/>
            <person name="Glithero R.J."/>
            <person name="Grafham D.V."/>
            <person name="Grant M."/>
            <person name="Gribble S."/>
            <person name="Griffiths C."/>
            <person name="Griffiths M.N.D."/>
            <person name="Hall R."/>
            <person name="Halls K.S."/>
            <person name="Hammond S."/>
            <person name="Harley J.L."/>
            <person name="Hart E.A."/>
            <person name="Heath P.D."/>
            <person name="Heathcott R."/>
            <person name="Holmes S.J."/>
            <person name="Howden P.J."/>
            <person name="Howe K.L."/>
            <person name="Howell G.R."/>
            <person name="Huckle E."/>
            <person name="Humphray S.J."/>
            <person name="Humphries M.D."/>
            <person name="Hunt A.R."/>
            <person name="Johnson C.M."/>
            <person name="Joy A.A."/>
            <person name="Kay M."/>
            <person name="Keenan S.J."/>
            <person name="Kimberley A.M."/>
            <person name="King A."/>
            <person name="Laird G.K."/>
            <person name="Langford C."/>
            <person name="Lawlor S."/>
            <person name="Leongamornlert D.A."/>
            <person name="Leversha M."/>
            <person name="Lloyd C.R."/>
            <person name="Lloyd D.M."/>
            <person name="Loveland J.E."/>
            <person name="Lovell J."/>
            <person name="Martin S."/>
            <person name="Mashreghi-Mohammadi M."/>
            <person name="Maslen G.L."/>
            <person name="Matthews L."/>
            <person name="McCann O.T."/>
            <person name="McLaren S.J."/>
            <person name="McLay K."/>
            <person name="McMurray A."/>
            <person name="Moore M.J.F."/>
            <person name="Mullikin J.C."/>
            <person name="Niblett D."/>
            <person name="Nickerson T."/>
            <person name="Novik K.L."/>
            <person name="Oliver K."/>
            <person name="Overton-Larty E.K."/>
            <person name="Parker A."/>
            <person name="Patel R."/>
            <person name="Pearce A.V."/>
            <person name="Peck A.I."/>
            <person name="Phillimore B.J.C.T."/>
            <person name="Phillips S."/>
            <person name="Plumb R.W."/>
            <person name="Porter K.M."/>
            <person name="Ramsey Y."/>
            <person name="Ranby S.A."/>
            <person name="Rice C.M."/>
            <person name="Ross M.T."/>
            <person name="Searle S.M."/>
            <person name="Sehra H.K."/>
            <person name="Sheridan E."/>
            <person name="Skuce C.D."/>
            <person name="Smith S."/>
            <person name="Smith M."/>
            <person name="Spraggon L."/>
            <person name="Squares S.L."/>
            <person name="Steward C.A."/>
            <person name="Sycamore N."/>
            <person name="Tamlyn-Hall G."/>
            <person name="Tester J."/>
            <person name="Theaker A.J."/>
            <person name="Thomas D.W."/>
            <person name="Thorpe A."/>
            <person name="Tracey A."/>
            <person name="Tromans A."/>
            <person name="Tubby B."/>
            <person name="Wall M."/>
            <person name="Wallis J.M."/>
            <person name="West A.P."/>
            <person name="White S.S."/>
            <person name="Whitehead S.L."/>
            <person name="Whittaker H."/>
            <person name="Wild A."/>
            <person name="Willey D.J."/>
            <person name="Wilmer T.E."/>
            <person name="Wood J.M."/>
            <person name="Wray P.W."/>
            <person name="Wyatt J.C."/>
            <person name="Young L."/>
            <person name="Younger R.M."/>
            <person name="Bentley D.R."/>
            <person name="Coulson A."/>
            <person name="Durbin R.M."/>
            <person name="Hubbard T."/>
            <person name="Sulston J.E."/>
            <person name="Dunham I."/>
            <person name="Rogers J."/>
            <person name="Beck S."/>
        </authorList>
    </citation>
    <scope>NUCLEOTIDE SEQUENCE [LARGE SCALE GENOMIC DNA]</scope>
</reference>
<reference key="5">
    <citation type="journal article" date="2004" name="Genome Res.">
        <title>The status, quality, and expansion of the NIH full-length cDNA project: the Mammalian Gene Collection (MGC).</title>
        <authorList>
            <consortium name="The MGC Project Team"/>
        </authorList>
    </citation>
    <scope>NUCLEOTIDE SEQUENCE [LARGE SCALE MRNA] (ISOFORM 1)</scope>
    <source>
        <tissue>Eye</tissue>
        <tissue>Lung</tissue>
    </source>
</reference>
<reference key="6">
    <citation type="journal article" date="1998" name="EMBO J.">
        <title>Mammalian thioredoxin is a direct inhibitor of apoptosis signal-regulating kinase (ASK) 1.</title>
        <authorList>
            <person name="Saitoh M."/>
            <person name="Nishitoh H."/>
            <person name="Fujii M."/>
            <person name="Takeda K."/>
            <person name="Tobiume K."/>
            <person name="Sawada Y."/>
            <person name="Kawabata M."/>
            <person name="Miyazono K."/>
            <person name="Ichijo H."/>
        </authorList>
    </citation>
    <scope>INTERACTION WITH TXN</scope>
    <scope>ACTIVITY REGULATION</scope>
    <scope>FUNCTION</scope>
</reference>
<reference key="7">
    <citation type="journal article" date="1998" name="Mol. Cell">
        <title>ASK1 is essential for JNK/SAPK activation by TRAF2.</title>
        <authorList>
            <person name="Nishitoh H."/>
            <person name="Saitoh M."/>
            <person name="Mochida Y."/>
            <person name="Takeda K."/>
            <person name="Nakano H."/>
            <person name="Rothe M."/>
            <person name="Miyazono K."/>
            <person name="Ichijo H."/>
        </authorList>
    </citation>
    <scope>ACTIVITY REGULATION</scope>
    <scope>INTERACTION WITH TRAF2</scope>
    <scope>FUNCTION</scope>
</reference>
<reference key="8">
    <citation type="journal article" date="1998" name="Science">
        <title>Activation of apoptosis signal-regulating kinase 1 (ASK1) by the adapter protein Daxx.</title>
        <authorList>
            <person name="Chang H.Y."/>
            <person name="Nishitoh H."/>
            <person name="Yang X."/>
            <person name="Ichijo H."/>
            <person name="Baltimore D."/>
        </authorList>
    </citation>
    <scope>INTERACTION WITH DAXX</scope>
    <scope>MUTAGENESIS OF LYS-709</scope>
</reference>
<reference key="9">
    <citation type="journal article" date="1999" name="Proc. Natl. Acad. Sci. U.S.A.">
        <title>Suppression of apoptosis signal-regulating kinase 1-induced cell death by 14-3-3 proteins.</title>
        <authorList>
            <person name="Zhang L."/>
            <person name="Chen J."/>
            <person name="Fu H."/>
        </authorList>
    </citation>
    <scope>INTERACTION WITH 14-3-3 PROTEINS</scope>
    <scope>ACTIVITY REGULATION</scope>
    <scope>MUTAGENESIS OF SER-966</scope>
    <scope>FUNCTION</scope>
</reference>
<reference key="10">
    <citation type="journal article" date="2000" name="J. Biol. Chem.">
        <title>Execution of apoptosis signal-regulating kinase 1 (ASK1)-induced apoptosis by the mitochondria-dependent caspase activation.</title>
        <authorList>
            <person name="Hatai T."/>
            <person name="Matsuzawa A."/>
            <person name="Inoshita S."/>
            <person name="Mochida Y."/>
            <person name="Kuroda T."/>
            <person name="Sakamaki K."/>
            <person name="Kuida K."/>
            <person name="Yonehara S."/>
            <person name="Ichijo H."/>
            <person name="Takeda K."/>
        </authorList>
    </citation>
    <scope>FUNCTION IN APOPTOSIS</scope>
</reference>
<reference key="11">
    <citation type="journal article" date="2000" name="Mol. Cell. Biol.">
        <title>Activation of apoptosis signal-regulating kinase 1 (ASK1) by tumor necrosis factor receptor-associated factor 2 requires prior dissociation of the ASK1 inhibitor thioredoxin.</title>
        <authorList>
            <person name="Liu H."/>
            <person name="Nishitoh H."/>
            <person name="Ichijo H."/>
            <person name="Kyriakis J.M."/>
        </authorList>
    </citation>
    <scope>SUBUNIT</scope>
    <scope>INTERACTION WITH TRAF2</scope>
    <scope>ACTIVITY REGULATION</scope>
    <scope>FUNCTION</scope>
</reference>
<reference key="12">
    <citation type="journal article" date="2000" name="Science">
        <title>Beta-arrestin 2: a receptor-regulated MAPK scaffold for the activation of JNK3.</title>
        <authorList>
            <person name="McDonald P.H."/>
            <person name="Chow C.W."/>
            <person name="Miller W.E."/>
            <person name="Laporte S.A."/>
            <person name="Field M.E."/>
            <person name="Lin F.-T."/>
            <person name="Davis R.J."/>
            <person name="Lefkowitz R.J."/>
        </authorList>
    </citation>
    <scope>INTERACTION WITH ARRB2</scope>
</reference>
<reference key="13">
    <citation type="journal article" date="2001" name="EMBO J.">
        <title>Negative feedback regulation of ASK1 by protein phosphatase 5 (PP5) in response to oxidative stress.</title>
        <authorList>
            <person name="Morita K."/>
            <person name="Saitoh M."/>
            <person name="Tobiume K."/>
            <person name="Matsuura H."/>
            <person name="Enomoto S."/>
            <person name="Nishitoh H."/>
            <person name="Ichijo H."/>
        </authorList>
    </citation>
    <scope>INTERACTION WITH PPP5C</scope>
    <scope>DEPHOSPHORYLATION AT THR-838</scope>
    <scope>SUBCELLULAR LOCATION</scope>
    <scope>ACTIVITY REGULATION</scope>
    <scope>FUNCTION</scope>
</reference>
<reference key="14">
    <citation type="journal article" date="2001" name="J. Biol. Chem.">
        <title>Apoptosis signal-regulating kinase 1 (ASK1) is an intracellular inducer of keratinocyte differentiation.</title>
        <authorList>
            <person name="Sayama K."/>
            <person name="Hanakawa Y."/>
            <person name="Shirakata Y."/>
            <person name="Yamasaki K."/>
            <person name="Sawada Y."/>
            <person name="Sun L."/>
            <person name="Yamanishi K."/>
            <person name="Ichijo H."/>
            <person name="Hashimoto K."/>
        </authorList>
    </citation>
    <scope>FUNCTION IN KERATINOCYTE DIFFERENTIATION</scope>
</reference>
<reference key="15">
    <citation type="journal article" date="2001" name="Mol. Cell. Biol.">
        <title>Akt phosphorylates and negatively regulates apoptosis signal-regulating kinase 1.</title>
        <authorList>
            <person name="Kim A.H."/>
            <person name="Khursigara G."/>
            <person name="Sun X."/>
            <person name="Franke T.F."/>
            <person name="Chao M.V."/>
        </authorList>
    </citation>
    <scope>PHOSPHORYLATION AT SER-83</scope>
    <scope>ACTIVITY REGULATION</scope>
    <scope>FUNCTION</scope>
</reference>
<reference key="16">
    <citation type="journal article" date="2001" name="Nature">
        <title>HIV-1 Nef inhibits ASK1-dependent death signalling providing a potential mechanism for protecting the infected host cell.</title>
        <authorList>
            <person name="Geleziunas R."/>
            <person name="Xu W."/>
            <person name="Takeda K."/>
            <person name="Ichijo H."/>
            <person name="Greene W.C."/>
        </authorList>
    </citation>
    <scope>INTERACTION WITH HIV-1 NEF (MICROBIAL INFECTION)</scope>
    <scope>INHIBITION BY HIV-1 NEF (MICROBIAL INFECTION)</scope>
</reference>
<reference key="17">
    <citation type="journal article" date="2001" name="Proc. Natl. Acad. Sci. U.S.A.">
        <title>Raf-1 promotes cell survival by antagonizing apoptosis signal-regulating kinase 1 through a MEK-ERK independent mechanism.</title>
        <authorList>
            <person name="Chen J."/>
            <person name="Fujii K."/>
            <person name="Zhang L."/>
            <person name="Roberts T."/>
            <person name="Fu H."/>
        </authorList>
    </citation>
    <scope>INTERACTION WITH RAF1</scope>
</reference>
<reference key="18">
    <citation type="journal article" date="2004" name="EMBO Rep.">
        <title>Involvement of ASK1 in Ca2+-induced p38 MAP kinase activation.</title>
        <authorList>
            <person name="Takeda K."/>
            <person name="Matsuzawa A."/>
            <person name="Nishitoh H."/>
            <person name="Tobiume K."/>
            <person name="Kishida S."/>
            <person name="Ninomiya-Tsuji J."/>
            <person name="Matsumoto K."/>
            <person name="Ichijo H."/>
        </authorList>
    </citation>
    <scope>INTERACTION WITH TRAF2 AND ERN1</scope>
    <scope>ACTIVITY REGULATION</scope>
    <scope>FUNCTION IN ER STRESS RESPONSE</scope>
</reference>
<reference key="19">
    <citation type="journal article" date="2002" name="J. Cell. Physiol.">
        <title>Activation of apoptosis signal-regulating kinase 1 by the stress-induced activating phosphorylation of pre-formed oligomer.</title>
        <authorList>
            <person name="Tobiume K."/>
            <person name="Saitoh M."/>
            <person name="Ichijo H."/>
        </authorList>
    </citation>
    <scope>FUNCTION</scope>
    <scope>HOMODIMERIZATION</scope>
    <scope>ACTIVITY REGULATION</scope>
    <scope>PHOSPHORYLATION AT THR-838</scope>
</reference>
<reference key="20">
    <citation type="journal article" date="2003" name="J. Biol. Chem.">
        <title>Type 1 insulin-like growth factor receptor (IGF-IR) signaling inhibits apoptosis signal-regulating kinase 1 (ASK1).</title>
        <authorList>
            <person name="Galvan V."/>
            <person name="Logvinova A."/>
            <person name="Sperandio S."/>
            <person name="Ichijo H."/>
            <person name="Bredesen D.E."/>
        </authorList>
    </citation>
    <scope>INTERACTION WITH IGF1R</scope>
    <scope>PHOSPHORYLATION</scope>
    <scope>ACTIVITY REGULATION</scope>
    <scope>SUBCELLULAR LOCATION</scope>
</reference>
<reference key="21">
    <citation type="journal article" date="2003" name="J. Biol. Chem.">
        <title>AKT2 inhibition of cisplatin-induced JNK/p38 and Bax activation by phosphorylation of ASK1: implication of AKT2 in chemoresistance.</title>
        <authorList>
            <person name="Yuan Z.Q."/>
            <person name="Feldman R.I."/>
            <person name="Sussman G.E."/>
            <person name="Coppola D."/>
            <person name="Nicosia S.V."/>
            <person name="Cheng J.Q."/>
        </authorList>
    </citation>
    <scope>RETRACTED PAPER</scope>
</reference>
<reference key="22">
    <citation type="journal article" date="2016" name="J. Biol. Chem.">
        <authorList>
            <person name="Yuan Z.Q."/>
            <person name="Feldman R.I."/>
            <person name="Sussman G.E."/>
            <person name="Coppola D."/>
            <person name="Nicosia S.V."/>
            <person name="Cheng J.Q."/>
        </authorList>
    </citation>
    <scope>RETRACTION NOTICE OF PUBMED:12697749</scope>
</reference>
<reference key="23">
    <citation type="journal article" date="2003" name="J. Clin. Invest.">
        <title>AIP1 mediates TNF-alpha-induced ASK1 activation by facilitating dissociation of ASK1 from its inhibitor 14-3-3.</title>
        <authorList>
            <person name="Zhang R."/>
            <person name="He X."/>
            <person name="Liu W."/>
            <person name="Lu M."/>
            <person name="Hsieh J.-T."/>
            <person name="Min W."/>
        </authorList>
    </citation>
    <scope>INTERACTION WITH DAB2IP</scope>
</reference>
<reference key="24">
    <citation type="journal article" date="2004" name="Exp. Cell Res.">
        <title>Interaction of apoptosis signal-regulating kinase 1 with isoforms of 14-3-3 proteins.</title>
        <authorList>
            <person name="Subramanian R.R."/>
            <person name="Zhang H."/>
            <person name="Wang H."/>
            <person name="Ichijo H."/>
            <person name="Miyashita T."/>
            <person name="Fu H."/>
        </authorList>
    </citation>
    <scope>INTERACTION WITH YWHAB; YWHAE; YWHAH; YWHAQ; YWHAZ AND SFN</scope>
    <scope>FUNCTION</scope>
    <scope>SUBCELLULAR LOCATION</scope>
</reference>
<reference key="25">
    <citation type="journal article" date="2004" name="J. Biol. Chem.">
        <title>Activation of apoptosis signal-regulating kinase 1 by reactive oxygen species through dephosphorylation at serine 967 and 14-3-3 dissociation.</title>
        <authorList>
            <person name="Goldman E.H."/>
            <person name="Chen L."/>
            <person name="Fu H."/>
        </authorList>
    </citation>
    <scope>PHOSPHORYLATION AT SER-966</scope>
    <scope>ACTIVITY REGULATION</scope>
    <scope>FUNCTION</scope>
</reference>
<reference key="26">
    <citation type="journal article" date="2004" name="J. Biol. Chem.">
        <title>AIP1/DAB2IP, a novel member of the Ras-GAP family, transduces TRAF2-induced ASK1-JNK activation.</title>
        <authorList>
            <person name="Zhang H."/>
            <person name="Zhang R."/>
            <person name="Luo Y."/>
            <person name="D'Alessio A."/>
            <person name="Pober J.S."/>
            <person name="Min W."/>
        </authorList>
    </citation>
    <scope>INTERACTION WITH DAB2IP</scope>
</reference>
<reference key="27">
    <citation type="journal article" date="2004" name="Oncogene">
        <title>Negative control of apoptosis signal-regulating kinase 1 through phosphorylation of Ser-1034.</title>
        <authorList>
            <person name="Fujii K."/>
            <person name="Goldman E.H."/>
            <person name="Park H.R."/>
            <person name="Zhang L."/>
            <person name="Chen J."/>
            <person name="Fu H."/>
        </authorList>
    </citation>
    <scope>ACTIVITY REGULATION</scope>
    <scope>PHOSPHORYLATION AT SER-966 AND SER-1033</scope>
    <scope>MUTAGENESIS OF SER-966 AND SER-1033</scope>
    <scope>INTERACTION WITH YWHAG</scope>
</reference>
<reference key="28">
    <citation type="journal article" date="2005" name="Cell Stress Chaperones">
        <title>C-terminus of heat shock protein 70-interacting protein facilitates degradation of apoptosis signal-regulating kinase 1 and inhibits apoptosis signal-regulating kinase 1-dependent apoptosis.</title>
        <authorList>
            <person name="Hwang J.R."/>
            <person name="Zhang C."/>
            <person name="Patterson C."/>
        </authorList>
    </citation>
    <scope>INTERACTION WITH STUB1</scope>
    <scope>UBIQUITINATION</scope>
</reference>
<reference key="29">
    <citation type="journal article" date="2005" name="J. Biol. Chem.">
        <title>Tumor necrosis factor alpha-induced desumoylation and cytoplasmic translocation of homeodomain-interacting protein kinase 1 are critical for apoptosis signal-regulating kinase 1-JNK/p38 activation.</title>
        <authorList>
            <person name="Li X."/>
            <person name="Zhang R."/>
            <person name="Luo D."/>
            <person name="Park S.-J."/>
            <person name="Wang Q."/>
            <person name="Kim Y."/>
            <person name="Min W."/>
        </authorList>
    </citation>
    <scope>INTERACTION WITH HIPK1</scope>
    <scope>SUBCELLULAR LOCATION</scope>
</reference>
<reference key="30">
    <citation type="journal article" date="2005" name="J. Biol. Chem.">
        <title>Recruitment of tumor necrosis factor receptor-associated factor family proteins to apoptosis signal-regulating kinase 1 signalosome is essential for oxidative stress-induced cell death.</title>
        <authorList>
            <person name="Noguchi T."/>
            <person name="Takeda K."/>
            <person name="Matsuzawa A."/>
            <person name="Saegusa K."/>
            <person name="Nakano H."/>
            <person name="Gohda J."/>
            <person name="Inoue J."/>
            <person name="Ichijo H."/>
        </authorList>
    </citation>
    <scope>SUBUNIT</scope>
    <scope>INTERACTION WITH TRAF2</scope>
    <scope>FUNCTION</scope>
</reference>
<reference key="31">
    <citation type="journal article" date="2006" name="J. Biol. Chem.">
        <title>SOCS1 inhibits tumor necrosis factor-induced activation of ASK1-JNK inflammatory signaling by mediating ASK1 degradation.</title>
        <authorList>
            <person name="He Y."/>
            <person name="Zhang W."/>
            <person name="Zhang R."/>
            <person name="Zhang H."/>
            <person name="Min W."/>
        </authorList>
    </citation>
    <scope>PHOSPHORYLATION AT TYR-718</scope>
    <scope>INTERACTION WITH SOCS1</scope>
    <scope>ACTIVITY REGULATION</scope>
</reference>
<reference key="32">
    <citation type="journal article" date="2007" name="Biochem. J.">
        <title>Regulation of apoptosis signal-regulating kinase 1 by protein phosphatase 2Cepsilon.</title>
        <authorList>
            <person name="Saito J."/>
            <person name="Toriumi S."/>
            <person name="Awano K."/>
            <person name="Ichijo H."/>
            <person name="Sasaki K."/>
            <person name="Kobayashi T."/>
            <person name="Tamura S."/>
        </authorList>
    </citation>
    <scope>INTERACTION WITH PPM1L</scope>
</reference>
<reference key="33">
    <citation type="journal article" date="2007" name="J. Biol. Chem.">
        <title>Apoptosis signal-regulating kinase (ASK) 2 functions as a mitogen-activated protein kinase kinase kinase in a heteromeric complex with ASK1.</title>
        <authorList>
            <person name="Takeda K."/>
            <person name="Shimozono R."/>
            <person name="Noguchi T."/>
            <person name="Umeda T."/>
            <person name="Morimoto Y."/>
            <person name="Naguro I."/>
            <person name="Tobiume K."/>
            <person name="Saitoh M."/>
            <person name="Matsuzawa A."/>
            <person name="Ichijo H."/>
        </authorList>
    </citation>
    <scope>ACTIVITY REGULATION</scope>
    <scope>INTERACTION WITH MAP3K5</scope>
    <scope>PHOSPHORYLATION AT THR-838</scope>
    <scope>MUTAGENESIS OF LYS-709</scope>
</reference>
<reference key="34">
    <citation type="journal article" date="2007" name="J. Biol. Chem.">
        <title>Tumor necrosis factor receptor 2 signaling induces selective c-IAP1-dependent ASK1 ubiquitination and terminates mitogen-activated protein kinase signaling.</title>
        <authorList>
            <person name="Zhao Y."/>
            <person name="Conze D.B."/>
            <person name="Hanover J.A."/>
            <person name="Ashwell J.D."/>
        </authorList>
    </citation>
    <scope>INTERACTION WITH BIRC2</scope>
    <scope>UBIQUITINATION</scope>
    <scope>FUNCTION</scope>
</reference>
<reference key="35">
    <citation type="journal article" date="2007" name="J. Biol. Chem.">
        <title>RIP1-mediated AIP1 phosphorylation at a 14-3-3-binding site is critical for tumor necrosis factor-induced ASK1-JNK/p38 activation.</title>
        <authorList>
            <person name="Zhang H."/>
            <person name="Zhang H."/>
            <person name="Lin Y."/>
            <person name="Li J."/>
            <person name="Pober J.S."/>
            <person name="Min W."/>
        </authorList>
    </citation>
    <scope>INTERACTION WITH DAB2IP</scope>
</reference>
<reference key="36">
    <citation type="journal article" date="2007" name="Mol. Cell. Biol.">
        <title>Thioredoxin and TRAF family proteins regulate reactive oxygen species-dependent activation of ASK1 through reciprocal modulation of the N-terminal homophilic interaction of ASK1.</title>
        <authorList>
            <person name="Fujino G."/>
            <person name="Noguchi T."/>
            <person name="Matsuzawa A."/>
            <person name="Yamauchi S."/>
            <person name="Saitoh M."/>
            <person name="Takeda K."/>
            <person name="Ichijo H."/>
        </authorList>
    </citation>
    <scope>INTERACTION WITH TRAF2; TRAF6 AND TXN</scope>
</reference>
<reference key="37">
    <citation type="journal article" date="2008" name="J. Biol. Chem.">
        <title>The beta-arrestin-2 scaffold protein promotes c-Jun N-terminal kinase-3 activation by binding to its nonconserved N terminus.</title>
        <authorList>
            <person name="Guo C."/>
            <person name="Whitmarsh A.J."/>
        </authorList>
    </citation>
    <scope>INTERACTION WITH ARRB2</scope>
</reference>
<reference key="38">
    <citation type="journal article" date="2008" name="J. Biol. Chem.">
        <title>Murine protein serine/threonine kinase 38 activates apoptosis signal-regulating kinase 1 via Thr 838 phosphorylation.</title>
        <authorList>
            <person name="Jung H."/>
            <person name="Seong H.A."/>
            <person name="Ha H."/>
        </authorList>
    </citation>
    <scope>PHOSPHORYLATION AT THR-838</scope>
</reference>
<reference key="39">
    <citation type="journal article" date="2008" name="J. Proteome Res.">
        <title>Phosphoproteome of resting human platelets.</title>
        <authorList>
            <person name="Zahedi R.P."/>
            <person name="Lewandrowski U."/>
            <person name="Wiesner J."/>
            <person name="Wortelkamp S."/>
            <person name="Moebius J."/>
            <person name="Schuetz C."/>
            <person name="Walter U."/>
            <person name="Gambaryan S."/>
            <person name="Sickmann A."/>
        </authorList>
    </citation>
    <scope>PHOSPHORYLATION [LARGE SCALE ANALYSIS] AT SER-1029 AND SER-1033</scope>
    <scope>IDENTIFICATION BY MASS SPECTROMETRY [LARGE SCALE ANALYSIS]</scope>
    <source>
        <tissue>Platelet</tissue>
    </source>
</reference>
<reference key="40">
    <citation type="journal article" date="2008" name="Proc. Natl. Acad. Sci. U.S.A.">
        <title>A quantitative atlas of mitotic phosphorylation.</title>
        <authorList>
            <person name="Dephoure N."/>
            <person name="Zhou C."/>
            <person name="Villen J."/>
            <person name="Beausoleil S.A."/>
            <person name="Bakalarski C.E."/>
            <person name="Elledge S.J."/>
            <person name="Gygi S.P."/>
        </authorList>
    </citation>
    <scope>PHOSPHORYLATION [LARGE SCALE ANALYSIS] AT SER-1029 AND SER-1033</scope>
    <scope>IDENTIFICATION BY MASS SPECTROMETRY [LARGE SCALE ANALYSIS]</scope>
    <source>
        <tissue>Cervix carcinoma</tissue>
    </source>
</reference>
<reference key="41">
    <citation type="journal article" date="2009" name="Mol. Cell. Proteomics">
        <title>Large-scale proteomics analysis of the human kinome.</title>
        <authorList>
            <person name="Oppermann F.S."/>
            <person name="Gnad F."/>
            <person name="Olsen J.V."/>
            <person name="Hornberger R."/>
            <person name="Greff Z."/>
            <person name="Keri G."/>
            <person name="Mann M."/>
            <person name="Daub H."/>
        </authorList>
    </citation>
    <scope>PHOSPHORYLATION [LARGE SCALE ANALYSIS] AT SER-1033</scope>
    <scope>IDENTIFICATION BY MASS SPECTROMETRY [LARGE SCALE ANALYSIS]</scope>
</reference>
<reference key="42">
    <citation type="journal article" date="2009" name="Oncogene">
        <title>PIM1 phosphorylates and negatively regulates ASK1-mediated apoptosis.</title>
        <authorList>
            <person name="Gu J.J."/>
            <person name="Wang Z."/>
            <person name="Reeves R."/>
            <person name="Magnuson N.S."/>
        </authorList>
    </citation>
    <scope>PHOSPHORYLATION AT SER-83 BY PIM1</scope>
    <scope>INTERACTION WITH PIM1</scope>
</reference>
<reference key="43">
    <citation type="journal article" date="2009" name="Proc. Natl. Acad. Sci. U.S.A.">
        <title>Mitochondrial phosphoglycerate mutase 5 uses alternate catalytic activity as a protein serine/threonine phosphatase to activate ASK1.</title>
        <authorList>
            <person name="Takeda K."/>
            <person name="Komuro Y."/>
            <person name="Hayakawa T."/>
            <person name="Oguchi H."/>
            <person name="Ishida Y."/>
            <person name="Murakami S."/>
            <person name="Noguchi T."/>
            <person name="Kinoshita H."/>
            <person name="Sekine Y."/>
            <person name="Iemura S."/>
            <person name="Natsume T."/>
            <person name="Ichijo H."/>
        </authorList>
    </citation>
    <scope>INTERACTION WITH PGAM5</scope>
    <scope>PHOSPHORYLATION AT THR-838; SER-966 AND SER-1033</scope>
</reference>
<reference key="44">
    <citation type="journal article" date="2008" name="Annu. Rev. Pharmacol. Toxicol.">
        <title>Apoptosis signal-regulating kinase 1 in stress and immune response.</title>
        <authorList>
            <person name="Takeda K."/>
            <person name="Noguchi T."/>
            <person name="Naguro I."/>
            <person name="Ichijo H."/>
        </authorList>
    </citation>
    <scope>REVIEW ON ACTIVITY REGULATION</scope>
    <scope>REVIEW ON FUNCTION</scope>
</reference>
<reference key="45">
    <citation type="journal article" date="2009" name="Cell Commun. Signal.">
        <title>The roles of ASK family proteins in stress responses and diseases.</title>
        <authorList>
            <person name="Hattori K."/>
            <person name="Naguro I."/>
            <person name="Runchel C."/>
            <person name="Ichijo H."/>
        </authorList>
    </citation>
    <scope>REVIEW ON ACTIVITY REGULATION</scope>
    <scope>REVIEW ON FUNCTION</scope>
</reference>
<reference key="46">
    <citation type="journal article" date="2010" name="Cell. Mol. Life Sci.">
        <title>Positive regulation of apoptosis signal-regulating kinase 1 by dual-specificity phosphatase 13A.</title>
        <authorList>
            <person name="Park J.E."/>
            <person name="Park B.C."/>
            <person name="Kim H.A."/>
            <person name="Song M."/>
            <person name="Park S.G."/>
            <person name="Lee D.H."/>
            <person name="Kim H.J."/>
            <person name="Choi H.K."/>
            <person name="Kim J.T."/>
            <person name="Cho S."/>
        </authorList>
    </citation>
    <scope>INTERACTION WITH DUSP13A</scope>
</reference>
<reference key="47">
    <citation type="journal article" date="2012" name="Cell Death Differ.">
        <title>Arginine methylation-dependent regulation of ASK1 signaling by PRMT1.</title>
        <authorList>
            <person name="Cho J.H."/>
            <person name="Lee M.K."/>
            <person name="Yoon K.W."/>
            <person name="Lee J."/>
            <person name="Cho S.G."/>
            <person name="Choi E.J."/>
        </authorList>
    </citation>
    <scope>INTERACTION WITH PRMT1 AND TRAF2</scope>
    <scope>METHYLATION AT ARG-78 AND ARG-80</scope>
    <scope>MUTAGENESIS OF ARG-32; ARG-78 AND ARG-80</scope>
</reference>
<reference key="48">
    <citation type="journal article" date="2012" name="Mol. Cell">
        <title>The Kelch repeat protein KLHDC10 regulates oxidative stress-induced ASK1 activation by suppressing PP5.</title>
        <authorList>
            <person name="Sekine Y."/>
            <person name="Hatanaka R."/>
            <person name="Watanabe T."/>
            <person name="Sono N."/>
            <person name="Iemura S."/>
            <person name="Natsume T."/>
            <person name="Kuranaga E."/>
            <person name="Miura M."/>
            <person name="Takeda K."/>
            <person name="Ichijo H."/>
        </authorList>
    </citation>
    <scope>FUNCTION</scope>
    <scope>PHOSPHORYLATION AT THR-838</scope>
    <scope>DEPHOSPHORYLATION AT THR-838 BY PPP5C</scope>
</reference>
<reference key="49">
    <citation type="journal article" date="2013" name="J. Proteome Res.">
        <title>Toward a comprehensive characterization of a human cancer cell phosphoproteome.</title>
        <authorList>
            <person name="Zhou H."/>
            <person name="Di Palma S."/>
            <person name="Preisinger C."/>
            <person name="Peng M."/>
            <person name="Polat A.N."/>
            <person name="Heck A.J."/>
            <person name="Mohammed S."/>
        </authorList>
    </citation>
    <scope>PHOSPHORYLATION [LARGE SCALE ANALYSIS] AT SER-958</scope>
    <scope>IDENTIFICATION BY MASS SPECTROMETRY [LARGE SCALE ANALYSIS]</scope>
    <source>
        <tissue>Erythroleukemia</tissue>
    </source>
</reference>
<reference key="50">
    <citation type="journal article" date="2014" name="J. Proteomics">
        <title>An enzyme assisted RP-RPLC approach for in-depth analysis of human liver phosphoproteome.</title>
        <authorList>
            <person name="Bian Y."/>
            <person name="Song C."/>
            <person name="Cheng K."/>
            <person name="Dong M."/>
            <person name="Wang F."/>
            <person name="Huang J."/>
            <person name="Sun D."/>
            <person name="Wang L."/>
            <person name="Ye M."/>
            <person name="Zou H."/>
        </authorList>
    </citation>
    <scope>IDENTIFICATION BY MASS SPECTROMETRY [LARGE SCALE ANALYSIS]</scope>
    <source>
        <tissue>Liver</tissue>
    </source>
</reference>
<reference key="51">
    <citation type="journal article" date="2014" name="Sci. Signal.">
        <title>Roquin-2 promotes ubiquitin-mediated degradation of ASK1 to regulate stress responses.</title>
        <authorList>
            <person name="Maruyama T."/>
            <person name="Araki T."/>
            <person name="Kawarazaki Y."/>
            <person name="Naguro I."/>
            <person name="Heynen S."/>
            <person name="Aza-Blanc P."/>
            <person name="Ronai Z."/>
            <person name="Matsuzawa A."/>
            <person name="Ichijo H."/>
        </authorList>
    </citation>
    <scope>INTERACTION WITH RC3H2</scope>
    <scope>MUTAGENESIS OF LYS-709</scope>
</reference>
<reference key="52">
    <citation type="journal article" date="2015" name="Biochem. Biophys. Res. Commun.">
        <title>Cyclophilin A regulates JNK/p38-MAPK signaling through its physical interaction with ASK1.</title>
        <authorList>
            <person name="Kim H."/>
            <person name="Oh Y."/>
            <person name="Kim K."/>
            <person name="Jeong S."/>
            <person name="Chon S."/>
            <person name="Kim D."/>
            <person name="Jung M.H."/>
            <person name="Pak Y.K."/>
            <person name="Ha J."/>
            <person name="Kang I."/>
            <person name="Choe W."/>
        </authorList>
    </citation>
    <scope>FUNCTION</scope>
    <scope>CATALYTIC ACTIVITY</scope>
    <scope>ACTIVITY REGULATION</scope>
    <scope>SUBCELLULAR LOCATION</scope>
    <scope>PHOSPHORYLATION AT SER-966</scope>
    <scope>INTERACTION WITH PPIA</scope>
</reference>
<reference key="53">
    <citation type="journal article" date="2017" name="Cell Rep.">
        <title>TRIM48 Promotes ASK1 Activation and Cell Death through Ubiquitination-Dependent Degradation of the ASK1-Negative Regulator PRMT1.</title>
        <authorList>
            <person name="Hirata Y."/>
            <person name="Katagiri K."/>
            <person name="Nagaoka K."/>
            <person name="Morishita T."/>
            <person name="Kudoh Y."/>
            <person name="Hatta T."/>
            <person name="Naguro I."/>
            <person name="Kano K."/>
            <person name="Udagawa T."/>
            <person name="Natsume T."/>
            <person name="Aoki J."/>
            <person name="Inada T."/>
            <person name="Noguchi T."/>
            <person name="Ichijo H."/>
            <person name="Matsuzawa A."/>
        </authorList>
    </citation>
    <scope>INTERACTION WITH TRIM48</scope>
    <scope>METHYLATION</scope>
    <scope>UBIQUITINATION</scope>
    <scope>MUTAGENESIS OF LYS-709 AND THR-838</scope>
</reference>
<reference key="54">
    <citation type="journal article" date="2007" name="Structure">
        <title>Structural and functional characterization of the human protein kinase ASK1.</title>
        <authorList>
            <person name="Bunkoczi G."/>
            <person name="Salah E."/>
            <person name="Filippakopoulos P."/>
            <person name="Fedorov O."/>
            <person name="Muller S."/>
            <person name="Sobott F."/>
            <person name="Parker S.A."/>
            <person name="Zhang H."/>
            <person name="Min W."/>
            <person name="Turk B.E."/>
            <person name="Knapp S."/>
        </authorList>
    </citation>
    <scope>X-RAY CRYSTALLOGRAPHY (2.3 ANGSTROMS) OF 659-951</scope>
    <scope>PHOSPHORYLATION AT THR-813; THR-838 AND THR-842</scope>
</reference>
<reference key="55">
    <citation type="journal article" date="2007" name="Nature">
        <title>Patterns of somatic mutation in human cancer genomes.</title>
        <authorList>
            <person name="Greenman C."/>
            <person name="Stephens P."/>
            <person name="Smith R."/>
            <person name="Dalgliesh G.L."/>
            <person name="Hunter C."/>
            <person name="Bignell G."/>
            <person name="Davies H."/>
            <person name="Teague J."/>
            <person name="Butler A."/>
            <person name="Stevens C."/>
            <person name="Edkins S."/>
            <person name="O'Meara S."/>
            <person name="Vastrik I."/>
            <person name="Schmidt E.E."/>
            <person name="Avis T."/>
            <person name="Barthorpe S."/>
            <person name="Bhamra G."/>
            <person name="Buck G."/>
            <person name="Choudhury B."/>
            <person name="Clements J."/>
            <person name="Cole J."/>
            <person name="Dicks E."/>
            <person name="Forbes S."/>
            <person name="Gray K."/>
            <person name="Halliday K."/>
            <person name="Harrison R."/>
            <person name="Hills K."/>
            <person name="Hinton J."/>
            <person name="Jenkinson A."/>
            <person name="Jones D."/>
            <person name="Menzies A."/>
            <person name="Mironenko T."/>
            <person name="Perry J."/>
            <person name="Raine K."/>
            <person name="Richardson D."/>
            <person name="Shepherd R."/>
            <person name="Small A."/>
            <person name="Tofts C."/>
            <person name="Varian J."/>
            <person name="Webb T."/>
            <person name="West S."/>
            <person name="Widaa S."/>
            <person name="Yates A."/>
            <person name="Cahill D.P."/>
            <person name="Louis D.N."/>
            <person name="Goldstraw P."/>
            <person name="Nicholson A.G."/>
            <person name="Brasseur F."/>
            <person name="Looijenga L."/>
            <person name="Weber B.L."/>
            <person name="Chiew Y.-E."/>
            <person name="DeFazio A."/>
            <person name="Greaves M.F."/>
            <person name="Green A.R."/>
            <person name="Campbell P."/>
            <person name="Birney E."/>
            <person name="Easton D.F."/>
            <person name="Chenevix-Trench G."/>
            <person name="Tan M.-H."/>
            <person name="Khoo S.K."/>
            <person name="Teh B.T."/>
            <person name="Yuen S.T."/>
            <person name="Leung S.Y."/>
            <person name="Wooster R."/>
            <person name="Futreal P.A."/>
            <person name="Stratton M.R."/>
        </authorList>
    </citation>
    <scope>VARIANTS [LARGE SCALE ANALYSIS] ARG-1006; THR-1214; VAL-1250; ILE-1314 AND ASN-1315</scope>
</reference>
<sequence length="1374" mass="154537">MSTEADEGITFSVPPFAPSGFCTIPEGGICRRGGAAAVGEGEEHQLPPPPPGSFWNVESAAAPGIGCPAATSSSSATRGRGSSVGGGSRRTTVAYVINEASQGQLVVAESEALQSLREACETVGATLETLHFGKLDFGETTVLDRFYNADIAVVEMSDAFRQPSLFYHLGVRESFSMANNIILYCDTNSDSLQSLKEIICQKNTMCTGNYTFVPYMITPHNKVYCCDSSFMKGLTELMQPNFELLLGPICLPLVDRFIQLLKVAQASSSQYFRESILNDIRKARNLYTGKELAAELARIRQRVDNIEVLTADIVINLLLSYRDIQDYDSIVKLVETLEKLPTFDLASHHHVKFHYAFALNRRNLPGDRAKALDIMIPMVQSEGQVASDMYCLVGRIYKDMFLDSNFTDTESRDHGASWFKKAFESEPTLQSGINYAVLLLAAGHQFESSFELRKVGVKLSSLLGKKGNLEKLQSYWEVGFFLGASVLANDHMRVIQASEKLFKLKTPAWYLKSIVETILIYKHFVKLTTEQPVAKQELVDFWMDFLVEATKTDVTVVRFPVLILEPTKIYQPSYLSINNEVEEKTISIWHVLPDDKKGIHEWNFSASSVRGVSISKFEERCCFLYVLHNSDDFQIYFCTELHCKKFFEMVNTITEEKGRSTEEGDCESDLLEYDYEYDENGDRVVLGKGTYGIVYAGRDLSNQVRIAIKEIPERDSRYSQPLHEEIALHKHLKHKNIVQYLGSFSENGFIKIFMEQVPGGSLSALLRSKWGPLKDNEQTIGFYTKQILEGLKYLHDNQIVHRDIKGDNVLINTYSGVLKISDFGTSKRLAGINPCTETFTGTLQYMAPEIIDKGPRGYGKAADIWSLGCTIIEMATGKPPFYELGEPQAAMFKVGMFKVHPEIPESMSAEAKAFILKCFEPDPDKRACANDLLVDEFLKVSSKKKKTQPKLSALSAGSNEYLRSISLPVPVLVEDTSSSSEYGSVSPDTELKVDPFSFKTRAKSCGERDVKGIRTLFLGIPDENFEDHSAPPSPEEKDSGFFMLRKDSERRATLHRILTEDQDKIVRNLMESLAQGAEEPKLKWEHITTLIASLREFVRSTDRKIIATTLSKLKLELDFDSHGISQVQVVLFGFQDAVNKVLRNHNIKPHWMFALDSIIRKAVQTAITILVPELRPHFSLASESDTADQEDLDVEDDHEEQPSNQTVRRPQAVIEDAVATSGVSTLSSTVSHDSQSAHRSLNVQLGRMKIETNRLLEELVRKEKELQALLHRAIEEKDQEIKHLKLKSQPIEIPELPVFHLNSSGTNTEDSELTDWLRVNGADEDTISRFLAEDYTLLDVLYYVTRDDLKCLRLRGGMLCTLWKAIIDFRNKQT</sequence>
<protein>
    <recommendedName>
        <fullName>Mitogen-activated protein kinase kinase kinase 5</fullName>
        <ecNumber evidence="43">2.7.11.25</ecNumber>
    </recommendedName>
    <alternativeName>
        <fullName>Apoptosis signal-regulating kinase 1</fullName>
        <shortName>ASK-1</shortName>
    </alternativeName>
    <alternativeName>
        <fullName>MAPK/ERK kinase kinase 5</fullName>
        <shortName>MEK kinase 5</shortName>
        <shortName>MEKK 5</shortName>
    </alternativeName>
</protein>
<name>M3K5_HUMAN</name>
<evidence type="ECO:0000250" key="1">
    <source>
        <dbReference type="UniProtKB" id="O35099"/>
    </source>
</evidence>
<evidence type="ECO:0000255" key="2"/>
<evidence type="ECO:0000255" key="3">
    <source>
        <dbReference type="PROSITE-ProRule" id="PRU00159"/>
    </source>
</evidence>
<evidence type="ECO:0000255" key="4">
    <source>
        <dbReference type="PROSITE-ProRule" id="PRU10027"/>
    </source>
</evidence>
<evidence type="ECO:0000256" key="5">
    <source>
        <dbReference type="SAM" id="MobiDB-lite"/>
    </source>
</evidence>
<evidence type="ECO:0000269" key="6">
    <source>
    </source>
</evidence>
<evidence type="ECO:0000269" key="7">
    <source>
    </source>
</evidence>
<evidence type="ECO:0000269" key="8">
    <source>
    </source>
</evidence>
<evidence type="ECO:0000269" key="9">
    <source>
    </source>
</evidence>
<evidence type="ECO:0000269" key="10">
    <source>
    </source>
</evidence>
<evidence type="ECO:0000269" key="11">
    <source>
    </source>
</evidence>
<evidence type="ECO:0000269" key="12">
    <source>
    </source>
</evidence>
<evidence type="ECO:0000269" key="13">
    <source>
    </source>
</evidence>
<evidence type="ECO:0000269" key="14">
    <source>
    </source>
</evidence>
<evidence type="ECO:0000269" key="15">
    <source>
    </source>
</evidence>
<evidence type="ECO:0000269" key="16">
    <source>
    </source>
</evidence>
<evidence type="ECO:0000269" key="17">
    <source>
    </source>
</evidence>
<evidence type="ECO:0000269" key="18">
    <source>
    </source>
</evidence>
<evidence type="ECO:0000269" key="19">
    <source>
    </source>
</evidence>
<evidence type="ECO:0000269" key="20">
    <source>
    </source>
</evidence>
<evidence type="ECO:0000269" key="21">
    <source>
    </source>
</evidence>
<evidence type="ECO:0000269" key="22">
    <source>
    </source>
</evidence>
<evidence type="ECO:0000269" key="23">
    <source>
    </source>
</evidence>
<evidence type="ECO:0000269" key="24">
    <source>
    </source>
</evidence>
<evidence type="ECO:0000269" key="25">
    <source>
    </source>
</evidence>
<evidence type="ECO:0000269" key="26">
    <source>
    </source>
</evidence>
<evidence type="ECO:0000269" key="27">
    <source>
    </source>
</evidence>
<evidence type="ECO:0000269" key="28">
    <source>
    </source>
</evidence>
<evidence type="ECO:0000269" key="29">
    <source>
    </source>
</evidence>
<evidence type="ECO:0000269" key="30">
    <source>
    </source>
</evidence>
<evidence type="ECO:0000269" key="31">
    <source>
    </source>
</evidence>
<evidence type="ECO:0000269" key="32">
    <source>
    </source>
</evidence>
<evidence type="ECO:0000269" key="33">
    <source>
    </source>
</evidence>
<evidence type="ECO:0000269" key="34">
    <source>
    </source>
</evidence>
<evidence type="ECO:0000269" key="35">
    <source>
    </source>
</evidence>
<evidence type="ECO:0000269" key="36">
    <source>
    </source>
</evidence>
<evidence type="ECO:0000269" key="37">
    <source>
    </source>
</evidence>
<evidence type="ECO:0000269" key="38">
    <source>
    </source>
</evidence>
<evidence type="ECO:0000269" key="39">
    <source>
    </source>
</evidence>
<evidence type="ECO:0000269" key="40">
    <source>
    </source>
</evidence>
<evidence type="ECO:0000269" key="41">
    <source>
    </source>
</evidence>
<evidence type="ECO:0000269" key="42">
    <source>
    </source>
</evidence>
<evidence type="ECO:0000269" key="43">
    <source>
    </source>
</evidence>
<evidence type="ECO:0000269" key="44">
    <source>
    </source>
</evidence>
<evidence type="ECO:0000269" key="45">
    <source>
    </source>
</evidence>
<evidence type="ECO:0000269" key="46">
    <source>
    </source>
</evidence>
<evidence type="ECO:0000269" key="47">
    <source>
    </source>
</evidence>
<evidence type="ECO:0000269" key="48">
    <source>
    </source>
</evidence>
<evidence type="ECO:0000269" key="49">
    <source>
    </source>
</evidence>
<evidence type="ECO:0000303" key="50">
    <source>
    </source>
</evidence>
<evidence type="ECO:0000305" key="51"/>
<evidence type="ECO:0000305" key="52">
    <source>
    </source>
</evidence>
<evidence type="ECO:0007744" key="53">
    <source>
    </source>
</evidence>
<evidence type="ECO:0007744" key="54">
    <source>
    </source>
</evidence>
<evidence type="ECO:0007744" key="55">
    <source>
    </source>
</evidence>
<evidence type="ECO:0007744" key="56">
    <source>
    </source>
</evidence>
<evidence type="ECO:0007829" key="57">
    <source>
        <dbReference type="PDB" id="2CLQ"/>
    </source>
</evidence>
<evidence type="ECO:0007829" key="58">
    <source>
        <dbReference type="PDB" id="4BF2"/>
    </source>
</evidence>
<evidence type="ECO:0007829" key="59">
    <source>
        <dbReference type="PDB" id="5ULM"/>
    </source>
</evidence>
<evidence type="ECO:0007829" key="60">
    <source>
        <dbReference type="PDB" id="5V19"/>
    </source>
</evidence>
<evidence type="ECO:0007829" key="61">
    <source>
        <dbReference type="PDB" id="5VIL"/>
    </source>
</evidence>
<evidence type="ECO:0007829" key="62">
    <source>
        <dbReference type="PDB" id="6E2N"/>
    </source>
</evidence>
<evidence type="ECO:0007829" key="63">
    <source>
        <dbReference type="PDB" id="7MU7"/>
    </source>
</evidence>
<keyword id="KW-0002">3D-structure</keyword>
<keyword id="KW-0025">Alternative splicing</keyword>
<keyword id="KW-0053">Apoptosis</keyword>
<keyword id="KW-0067">ATP-binding</keyword>
<keyword id="KW-0175">Coiled coil</keyword>
<keyword id="KW-0963">Cytoplasm</keyword>
<keyword id="KW-0256">Endoplasmic reticulum</keyword>
<keyword id="KW-0945">Host-virus interaction</keyword>
<keyword id="KW-0391">Immunity</keyword>
<keyword id="KW-0399">Innate immunity</keyword>
<keyword id="KW-0418">Kinase</keyword>
<keyword id="KW-0460">Magnesium</keyword>
<keyword id="KW-0479">Metal-binding</keyword>
<keyword id="KW-0488">Methylation</keyword>
<keyword id="KW-0547">Nucleotide-binding</keyword>
<keyword id="KW-0597">Phosphoprotein</keyword>
<keyword id="KW-1267">Proteomics identification</keyword>
<keyword id="KW-1185">Reference proteome</keyword>
<keyword id="KW-0723">Serine/threonine-protein kinase</keyword>
<keyword id="KW-0346">Stress response</keyword>
<keyword id="KW-0808">Transferase</keyword>
<keyword id="KW-0832">Ubl conjugation</keyword>
<organism>
    <name type="scientific">Homo sapiens</name>
    <name type="common">Human</name>
    <dbReference type="NCBI Taxonomy" id="9606"/>
    <lineage>
        <taxon>Eukaryota</taxon>
        <taxon>Metazoa</taxon>
        <taxon>Chordata</taxon>
        <taxon>Craniata</taxon>
        <taxon>Vertebrata</taxon>
        <taxon>Euteleostomi</taxon>
        <taxon>Mammalia</taxon>
        <taxon>Eutheria</taxon>
        <taxon>Euarchontoglires</taxon>
        <taxon>Primates</taxon>
        <taxon>Haplorrhini</taxon>
        <taxon>Catarrhini</taxon>
        <taxon>Hominidae</taxon>
        <taxon>Homo</taxon>
    </lineage>
</organism>
<gene>
    <name type="primary">MAP3K5</name>
    <name type="synonym">ASK1</name>
    <name type="synonym">MAPKKK5</name>
    <name type="synonym">MEKK5</name>
</gene>
<dbReference type="EC" id="2.7.11.25" evidence="43"/>
<dbReference type="EMBL" id="U67156">
    <property type="protein sequence ID" value="AAC50894.1"/>
    <property type="molecule type" value="mRNA"/>
</dbReference>
<dbReference type="EMBL" id="D84476">
    <property type="protein sequence ID" value="BAA12684.2"/>
    <property type="molecule type" value="mRNA"/>
</dbReference>
<dbReference type="EMBL" id="AK294507">
    <property type="protein sequence ID" value="BAG57723.1"/>
    <property type="molecule type" value="mRNA"/>
</dbReference>
<dbReference type="EMBL" id="AL024508">
    <property type="status" value="NOT_ANNOTATED_CDS"/>
    <property type="molecule type" value="Genomic_DNA"/>
</dbReference>
<dbReference type="EMBL" id="AL121933">
    <property type="status" value="NOT_ANNOTATED_CDS"/>
    <property type="molecule type" value="Genomic_DNA"/>
</dbReference>
<dbReference type="EMBL" id="BC054503">
    <property type="protein sequence ID" value="AAH54503.1"/>
    <property type="molecule type" value="mRNA"/>
</dbReference>
<dbReference type="EMBL" id="BC088829">
    <property type="protein sequence ID" value="AAH88829.1"/>
    <property type="molecule type" value="mRNA"/>
</dbReference>
<dbReference type="CCDS" id="CCDS5179.1">
    <molecule id="Q99683-1"/>
</dbReference>
<dbReference type="RefSeq" id="NP_005914.1">
    <molecule id="Q99683-1"/>
    <property type="nucleotide sequence ID" value="NM_005923.4"/>
</dbReference>
<dbReference type="PDB" id="2CLQ">
    <property type="method" value="X-ray"/>
    <property type="resolution" value="2.30 A"/>
    <property type="chains" value="A/B=659-951"/>
</dbReference>
<dbReference type="PDB" id="3VW6">
    <property type="method" value="X-ray"/>
    <property type="resolution" value="2.40 A"/>
    <property type="chains" value="A/B=671-939"/>
</dbReference>
<dbReference type="PDB" id="4BF2">
    <property type="method" value="X-ray"/>
    <property type="resolution" value="2.11 A"/>
    <property type="chains" value="A/B=660-977"/>
</dbReference>
<dbReference type="PDB" id="4BHN">
    <property type="method" value="X-ray"/>
    <property type="resolution" value="2.30 A"/>
    <property type="chains" value="A/B=660-977"/>
</dbReference>
<dbReference type="PDB" id="4BIB">
    <property type="method" value="X-ray"/>
    <property type="resolution" value="2.43 A"/>
    <property type="chains" value="A/B=660-977"/>
</dbReference>
<dbReference type="PDB" id="4BIC">
    <property type="method" value="X-ray"/>
    <property type="resolution" value="2.62 A"/>
    <property type="chains" value="A/B=660-977"/>
</dbReference>
<dbReference type="PDB" id="4BID">
    <property type="method" value="X-ray"/>
    <property type="resolution" value="2.80 A"/>
    <property type="chains" value="A/B=660-977"/>
</dbReference>
<dbReference type="PDB" id="4BIE">
    <property type="method" value="X-ray"/>
    <property type="resolution" value="2.36 A"/>
    <property type="chains" value="A/B=660-977"/>
</dbReference>
<dbReference type="PDB" id="5ULM">
    <property type="method" value="X-ray"/>
    <property type="resolution" value="2.10 A"/>
    <property type="chains" value="A/B=269-658"/>
</dbReference>
<dbReference type="PDB" id="5UOR">
    <property type="method" value="X-ray"/>
    <property type="resolution" value="2.75 A"/>
    <property type="chains" value="A/B=670-939"/>
</dbReference>
<dbReference type="PDB" id="5UOX">
    <property type="method" value="X-ray"/>
    <property type="resolution" value="2.50 A"/>
    <property type="chains" value="A/B=670-940"/>
</dbReference>
<dbReference type="PDB" id="5UP3">
    <property type="method" value="X-ray"/>
    <property type="resolution" value="2.95 A"/>
    <property type="chains" value="A/B=670-940"/>
</dbReference>
<dbReference type="PDB" id="5V19">
    <property type="method" value="X-ray"/>
    <property type="resolution" value="3.10 A"/>
    <property type="chains" value="A/B=670-940"/>
</dbReference>
<dbReference type="PDB" id="5V24">
    <property type="method" value="X-ray"/>
    <property type="resolution" value="2.50 A"/>
    <property type="chains" value="A/B=670-940"/>
</dbReference>
<dbReference type="PDB" id="5VIL">
    <property type="method" value="X-ray"/>
    <property type="resolution" value="2.64 A"/>
    <property type="chains" value="A/B/C/D=659-951"/>
</dbReference>
<dbReference type="PDB" id="5VIO">
    <property type="method" value="X-ray"/>
    <property type="resolution" value="2.84 A"/>
    <property type="chains" value="A/B/C/D=659-951"/>
</dbReference>
<dbReference type="PDB" id="6E2M">
    <property type="method" value="X-ray"/>
    <property type="resolution" value="2.25 A"/>
    <property type="chains" value="A/B=659-951"/>
</dbReference>
<dbReference type="PDB" id="6E2N">
    <property type="method" value="X-ray"/>
    <property type="resolution" value="2.10 A"/>
    <property type="chains" value="A/B=659-951"/>
</dbReference>
<dbReference type="PDB" id="6E2O">
    <property type="method" value="X-ray"/>
    <property type="resolution" value="2.39 A"/>
    <property type="chains" value="A/B=659-951"/>
</dbReference>
<dbReference type="PDB" id="6EJL">
    <property type="method" value="X-ray"/>
    <property type="resolution" value="2.38 A"/>
    <property type="chains" value="C/D=963-970"/>
</dbReference>
<dbReference type="PDB" id="6OYT">
    <property type="method" value="X-ray"/>
    <property type="resolution" value="2.82 A"/>
    <property type="chains" value="A/B/C/D=667-939"/>
</dbReference>
<dbReference type="PDB" id="6OYW">
    <property type="method" value="X-ray"/>
    <property type="resolution" value="2.60 A"/>
    <property type="chains" value="A/B/C/D=658-951"/>
</dbReference>
<dbReference type="PDB" id="6VRE">
    <property type="method" value="X-ray"/>
    <property type="resolution" value="2.29 A"/>
    <property type="chains" value="A/B=661-951"/>
</dbReference>
<dbReference type="PDB" id="6XIH">
    <property type="method" value="X-ray"/>
    <property type="resolution" value="2.65 A"/>
    <property type="chains" value="A/B=667-953"/>
</dbReference>
<dbReference type="PDB" id="7MU6">
    <property type="method" value="X-ray"/>
    <property type="resolution" value="2.17 A"/>
    <property type="chains" value="A/B=660-977"/>
</dbReference>
<dbReference type="PDB" id="7MU7">
    <property type="method" value="X-ray"/>
    <property type="resolution" value="2.30 A"/>
    <property type="chains" value="A/B=660-977"/>
</dbReference>
<dbReference type="PDB" id="8QGY">
    <property type="method" value="EM"/>
    <property type="resolution" value="3.71 A"/>
    <property type="chains" value="A/B=88-976"/>
</dbReference>
<dbReference type="PDBsum" id="2CLQ"/>
<dbReference type="PDBsum" id="3VW6"/>
<dbReference type="PDBsum" id="4BF2"/>
<dbReference type="PDBsum" id="4BHN"/>
<dbReference type="PDBsum" id="4BIB"/>
<dbReference type="PDBsum" id="4BIC"/>
<dbReference type="PDBsum" id="4BID"/>
<dbReference type="PDBsum" id="4BIE"/>
<dbReference type="PDBsum" id="5ULM"/>
<dbReference type="PDBsum" id="5UOR"/>
<dbReference type="PDBsum" id="5UOX"/>
<dbReference type="PDBsum" id="5UP3"/>
<dbReference type="PDBsum" id="5V19"/>
<dbReference type="PDBsum" id="5V24"/>
<dbReference type="PDBsum" id="5VIL"/>
<dbReference type="PDBsum" id="5VIO"/>
<dbReference type="PDBsum" id="6E2M"/>
<dbReference type="PDBsum" id="6E2N"/>
<dbReference type="PDBsum" id="6E2O"/>
<dbReference type="PDBsum" id="6EJL"/>
<dbReference type="PDBsum" id="6OYT"/>
<dbReference type="PDBsum" id="6OYW"/>
<dbReference type="PDBsum" id="6VRE"/>
<dbReference type="PDBsum" id="6XIH"/>
<dbReference type="PDBsum" id="7MU6"/>
<dbReference type="PDBsum" id="7MU7"/>
<dbReference type="PDBsum" id="8QGY"/>
<dbReference type="EMDB" id="EMD-18396"/>
<dbReference type="SMR" id="Q99683"/>
<dbReference type="BioGRID" id="110381">
    <property type="interactions" value="141"/>
</dbReference>
<dbReference type="CORUM" id="Q99683"/>
<dbReference type="DIP" id="DIP-29516N"/>
<dbReference type="ELM" id="Q99683"/>
<dbReference type="FunCoup" id="Q99683">
    <property type="interactions" value="1489"/>
</dbReference>
<dbReference type="IntAct" id="Q99683">
    <property type="interactions" value="70"/>
</dbReference>
<dbReference type="MINT" id="Q99683"/>
<dbReference type="STRING" id="9606.ENSP00000351908"/>
<dbReference type="BindingDB" id="Q99683"/>
<dbReference type="ChEMBL" id="CHEMBL5285"/>
<dbReference type="DrugBank" id="DB14916">
    <property type="generic name" value="Selonsertib"/>
</dbReference>
<dbReference type="GuidetoPHARMACOLOGY" id="2080"/>
<dbReference type="CarbonylDB" id="Q99683"/>
<dbReference type="GlyGen" id="Q99683">
    <property type="glycosylation" value="1 site"/>
</dbReference>
<dbReference type="iPTMnet" id="Q99683"/>
<dbReference type="PhosphoSitePlus" id="Q99683"/>
<dbReference type="BioMuta" id="MAP3K5"/>
<dbReference type="DMDM" id="6685617"/>
<dbReference type="CPTAC" id="CPTAC-849"/>
<dbReference type="CPTAC" id="CPTAC-850"/>
<dbReference type="jPOST" id="Q99683"/>
<dbReference type="MassIVE" id="Q99683"/>
<dbReference type="PaxDb" id="9606-ENSP00000351908"/>
<dbReference type="PeptideAtlas" id="Q99683"/>
<dbReference type="ProteomicsDB" id="1258"/>
<dbReference type="ProteomicsDB" id="78395">
    <molecule id="Q99683-1"/>
</dbReference>
<dbReference type="Pumba" id="Q99683"/>
<dbReference type="Antibodypedia" id="3592">
    <property type="antibodies" value="1553 antibodies from 44 providers"/>
</dbReference>
<dbReference type="DNASU" id="4217"/>
<dbReference type="Ensembl" id="ENST00000359015.5">
    <molecule id="Q99683-1"/>
    <property type="protein sequence ID" value="ENSP00000351908.4"/>
    <property type="gene ID" value="ENSG00000197442.11"/>
</dbReference>
<dbReference type="GeneID" id="4217"/>
<dbReference type="KEGG" id="hsa:4217"/>
<dbReference type="MANE-Select" id="ENST00000359015.5">
    <property type="protein sequence ID" value="ENSP00000351908.4"/>
    <property type="RefSeq nucleotide sequence ID" value="NM_005923.4"/>
    <property type="RefSeq protein sequence ID" value="NP_005914.1"/>
</dbReference>
<dbReference type="UCSC" id="uc003qhc.4">
    <molecule id="Q99683-1"/>
    <property type="organism name" value="human"/>
</dbReference>
<dbReference type="AGR" id="HGNC:6857"/>
<dbReference type="CTD" id="4217"/>
<dbReference type="DisGeNET" id="4217"/>
<dbReference type="GeneCards" id="MAP3K5"/>
<dbReference type="HGNC" id="HGNC:6857">
    <property type="gene designation" value="MAP3K5"/>
</dbReference>
<dbReference type="HPA" id="ENSG00000197442">
    <property type="expression patterns" value="Tissue enhanced (adrenal)"/>
</dbReference>
<dbReference type="MIM" id="602448">
    <property type="type" value="gene"/>
</dbReference>
<dbReference type="neXtProt" id="NX_Q99683"/>
<dbReference type="OpenTargets" id="ENSG00000197442"/>
<dbReference type="PharmGKB" id="PA30601"/>
<dbReference type="VEuPathDB" id="HostDB:ENSG00000197442"/>
<dbReference type="eggNOG" id="KOG4279">
    <property type="taxonomic scope" value="Eukaryota"/>
</dbReference>
<dbReference type="GeneTree" id="ENSGT00940000159155"/>
<dbReference type="HOGENOM" id="CLU_003687_1_0_1"/>
<dbReference type="InParanoid" id="Q99683"/>
<dbReference type="OMA" id="CLAHSKN"/>
<dbReference type="OrthoDB" id="275301at2759"/>
<dbReference type="PAN-GO" id="Q99683">
    <property type="GO annotations" value="3 GO annotations based on evolutionary models"/>
</dbReference>
<dbReference type="PhylomeDB" id="Q99683"/>
<dbReference type="TreeFam" id="TF105115"/>
<dbReference type="BRENDA" id="2.7.12.2">
    <property type="organism ID" value="2681"/>
</dbReference>
<dbReference type="PathwayCommons" id="Q99683"/>
<dbReference type="Reactome" id="R-HSA-2559580">
    <property type="pathway name" value="Oxidative Stress Induced Senescence"/>
</dbReference>
<dbReference type="SignaLink" id="Q99683"/>
<dbReference type="SIGNOR" id="Q99683"/>
<dbReference type="BioGRID-ORCS" id="4217">
    <property type="hits" value="15 hits in 1195 CRISPR screens"/>
</dbReference>
<dbReference type="ChiTaRS" id="MAP3K5">
    <property type="organism name" value="human"/>
</dbReference>
<dbReference type="EvolutionaryTrace" id="Q99683"/>
<dbReference type="GeneWiki" id="ASK1"/>
<dbReference type="GenomeRNAi" id="4217"/>
<dbReference type="Pharos" id="Q99683">
    <property type="development level" value="Tchem"/>
</dbReference>
<dbReference type="PRO" id="PR:Q99683"/>
<dbReference type="Proteomes" id="UP000005640">
    <property type="component" value="Chromosome 6"/>
</dbReference>
<dbReference type="RNAct" id="Q99683">
    <property type="molecule type" value="protein"/>
</dbReference>
<dbReference type="Bgee" id="ENSG00000197442">
    <property type="expression patterns" value="Expressed in endothelial cell and 203 other cell types or tissues"/>
</dbReference>
<dbReference type="GO" id="GO:0005737">
    <property type="term" value="C:cytoplasm"/>
    <property type="evidence" value="ECO:0000314"/>
    <property type="project" value="UniProtKB"/>
</dbReference>
<dbReference type="GO" id="GO:0005829">
    <property type="term" value="C:cytosol"/>
    <property type="evidence" value="ECO:0000304"/>
    <property type="project" value="Reactome"/>
</dbReference>
<dbReference type="GO" id="GO:0009897">
    <property type="term" value="C:external side of plasma membrane"/>
    <property type="evidence" value="ECO:0007669"/>
    <property type="project" value="Ensembl"/>
</dbReference>
<dbReference type="GO" id="GO:1990604">
    <property type="term" value="C:IRE1-TRAF2-ASK1 complex"/>
    <property type="evidence" value="ECO:0000314"/>
    <property type="project" value="ParkinsonsUK-UCL"/>
</dbReference>
<dbReference type="GO" id="GO:1902911">
    <property type="term" value="C:protein kinase complex"/>
    <property type="evidence" value="ECO:0000314"/>
    <property type="project" value="ParkinsonsUK-UCL"/>
</dbReference>
<dbReference type="GO" id="GO:0032991">
    <property type="term" value="C:protein-containing complex"/>
    <property type="evidence" value="ECO:0000315"/>
    <property type="project" value="CAFA"/>
</dbReference>
<dbReference type="GO" id="GO:0005524">
    <property type="term" value="F:ATP binding"/>
    <property type="evidence" value="ECO:0000314"/>
    <property type="project" value="UniProtKB"/>
</dbReference>
<dbReference type="GO" id="GO:0042802">
    <property type="term" value="F:identical protein binding"/>
    <property type="evidence" value="ECO:0000353"/>
    <property type="project" value="IntAct"/>
</dbReference>
<dbReference type="GO" id="GO:0004706">
    <property type="term" value="F:JUN kinase kinase kinase activity"/>
    <property type="evidence" value="ECO:0000314"/>
    <property type="project" value="BHF-UCL"/>
</dbReference>
<dbReference type="GO" id="GO:0000287">
    <property type="term" value="F:magnesium ion binding"/>
    <property type="evidence" value="ECO:0000314"/>
    <property type="project" value="UniProtKB"/>
</dbReference>
<dbReference type="GO" id="GO:0004709">
    <property type="term" value="F:MAP kinase kinase kinase activity"/>
    <property type="evidence" value="ECO:0000314"/>
    <property type="project" value="UniProtKB"/>
</dbReference>
<dbReference type="GO" id="GO:0019904">
    <property type="term" value="F:protein domain specific binding"/>
    <property type="evidence" value="ECO:0000353"/>
    <property type="project" value="CAFA"/>
</dbReference>
<dbReference type="GO" id="GO:0042803">
    <property type="term" value="F:protein homodimerization activity"/>
    <property type="evidence" value="ECO:0000314"/>
    <property type="project" value="UniProtKB"/>
</dbReference>
<dbReference type="GO" id="GO:0004672">
    <property type="term" value="F:protein kinase activity"/>
    <property type="evidence" value="ECO:0000314"/>
    <property type="project" value="UniProtKB"/>
</dbReference>
<dbReference type="GO" id="GO:0019901">
    <property type="term" value="F:protein kinase binding"/>
    <property type="evidence" value="ECO:0007669"/>
    <property type="project" value="Ensembl"/>
</dbReference>
<dbReference type="GO" id="GO:0019903">
    <property type="term" value="F:protein phosphatase binding"/>
    <property type="evidence" value="ECO:0000353"/>
    <property type="project" value="BHF-UCL"/>
</dbReference>
<dbReference type="GO" id="GO:0106310">
    <property type="term" value="F:protein serine kinase activity"/>
    <property type="evidence" value="ECO:0007669"/>
    <property type="project" value="RHEA"/>
</dbReference>
<dbReference type="GO" id="GO:0004674">
    <property type="term" value="F:protein serine/threonine kinase activity"/>
    <property type="evidence" value="ECO:0000304"/>
    <property type="project" value="Reactome"/>
</dbReference>
<dbReference type="GO" id="GO:0097190">
    <property type="term" value="P:apoptotic signaling pathway"/>
    <property type="evidence" value="ECO:0000314"/>
    <property type="project" value="BHF-UCL"/>
</dbReference>
<dbReference type="GO" id="GO:0034198">
    <property type="term" value="P:cellular response to amino acid starvation"/>
    <property type="evidence" value="ECO:0000314"/>
    <property type="project" value="CAFA"/>
</dbReference>
<dbReference type="GO" id="GO:0070301">
    <property type="term" value="P:cellular response to hydrogen peroxide"/>
    <property type="evidence" value="ECO:0000314"/>
    <property type="project" value="BHF-UCL"/>
</dbReference>
<dbReference type="GO" id="GO:1902170">
    <property type="term" value="P:cellular response to reactive nitrogen species"/>
    <property type="evidence" value="ECO:0007669"/>
    <property type="project" value="Ensembl"/>
</dbReference>
<dbReference type="GO" id="GO:0071356">
    <property type="term" value="P:cellular response to tumor necrosis factor"/>
    <property type="evidence" value="ECO:0007669"/>
    <property type="project" value="Ensembl"/>
</dbReference>
<dbReference type="GO" id="GO:0090398">
    <property type="term" value="P:cellular senescence"/>
    <property type="evidence" value="ECO:0000304"/>
    <property type="project" value="Reactome"/>
</dbReference>
<dbReference type="GO" id="GO:0072577">
    <property type="term" value="P:endothelial cell apoptotic process"/>
    <property type="evidence" value="ECO:0007669"/>
    <property type="project" value="Ensembl"/>
</dbReference>
<dbReference type="GO" id="GO:0045087">
    <property type="term" value="P:innate immune response"/>
    <property type="evidence" value="ECO:0007669"/>
    <property type="project" value="UniProtKB-KW"/>
</dbReference>
<dbReference type="GO" id="GO:0070059">
    <property type="term" value="P:intrinsic apoptotic signaling pathway in response to endoplasmic reticulum stress"/>
    <property type="evidence" value="ECO:0000250"/>
    <property type="project" value="ParkinsonsUK-UCL"/>
</dbReference>
<dbReference type="GO" id="GO:0008631">
    <property type="term" value="P:intrinsic apoptotic signaling pathway in response to oxidative stress"/>
    <property type="evidence" value="ECO:0000314"/>
    <property type="project" value="UniProtKB"/>
</dbReference>
<dbReference type="GO" id="GO:0007254">
    <property type="term" value="P:JNK cascade"/>
    <property type="evidence" value="ECO:0000314"/>
    <property type="project" value="UniProtKB"/>
</dbReference>
<dbReference type="GO" id="GO:0000165">
    <property type="term" value="P:MAPK cascade"/>
    <property type="evidence" value="ECO:0000314"/>
    <property type="project" value="UniProtKB"/>
</dbReference>
<dbReference type="GO" id="GO:0051402">
    <property type="term" value="P:neuron apoptotic process"/>
    <property type="evidence" value="ECO:0000250"/>
    <property type="project" value="ParkinsonsUK-UCL"/>
</dbReference>
<dbReference type="GO" id="GO:0036480">
    <property type="term" value="P:neuron intrinsic apoptotic signaling pathway in response to oxidative stress"/>
    <property type="evidence" value="ECO:0000316"/>
    <property type="project" value="ParkinsonsUK-UCL"/>
</dbReference>
<dbReference type="GO" id="GO:0038066">
    <property type="term" value="P:p38MAPK cascade"/>
    <property type="evidence" value="ECO:0000318"/>
    <property type="project" value="GO_Central"/>
</dbReference>
<dbReference type="GO" id="GO:0043065">
    <property type="term" value="P:positive regulation of apoptotic process"/>
    <property type="evidence" value="ECO:0000314"/>
    <property type="project" value="UniProtKB"/>
</dbReference>
<dbReference type="GO" id="GO:0010666">
    <property type="term" value="P:positive regulation of cardiac muscle cell apoptotic process"/>
    <property type="evidence" value="ECO:0007669"/>
    <property type="project" value="Ensembl"/>
</dbReference>
<dbReference type="GO" id="GO:0045893">
    <property type="term" value="P:positive regulation of DNA-templated transcription"/>
    <property type="evidence" value="ECO:0000314"/>
    <property type="project" value="CAFA"/>
</dbReference>
<dbReference type="GO" id="GO:0046330">
    <property type="term" value="P:positive regulation of JNK cascade"/>
    <property type="evidence" value="ECO:0000250"/>
    <property type="project" value="ParkinsonsUK-UCL"/>
</dbReference>
<dbReference type="GO" id="GO:0043507">
    <property type="term" value="P:positive regulation of JUN kinase activity"/>
    <property type="evidence" value="ECO:0000315"/>
    <property type="project" value="ParkinsonsUK-UCL"/>
</dbReference>
<dbReference type="GO" id="GO:0045663">
    <property type="term" value="P:positive regulation of myoblast differentiation"/>
    <property type="evidence" value="ECO:0007669"/>
    <property type="project" value="Ensembl"/>
</dbReference>
<dbReference type="GO" id="GO:1900745">
    <property type="term" value="P:positive regulation of p38MAPK cascade"/>
    <property type="evidence" value="ECO:0007669"/>
    <property type="project" value="Ensembl"/>
</dbReference>
<dbReference type="GO" id="GO:1904707">
    <property type="term" value="P:positive regulation of vascular associated smooth muscle cell proliferation"/>
    <property type="evidence" value="ECO:0007669"/>
    <property type="project" value="Ensembl"/>
</dbReference>
<dbReference type="GO" id="GO:0097300">
    <property type="term" value="P:programmed necrotic cell death"/>
    <property type="evidence" value="ECO:0007669"/>
    <property type="project" value="Ensembl"/>
</dbReference>
<dbReference type="GO" id="GO:0034976">
    <property type="term" value="P:response to endoplasmic reticulum stress"/>
    <property type="evidence" value="ECO:0000315"/>
    <property type="project" value="ParkinsonsUK-UCL"/>
</dbReference>
<dbReference type="GO" id="GO:0002931">
    <property type="term" value="P:response to ischemia"/>
    <property type="evidence" value="ECO:0007669"/>
    <property type="project" value="Ensembl"/>
</dbReference>
<dbReference type="GO" id="GO:0051403">
    <property type="term" value="P:stress-activated MAPK cascade"/>
    <property type="evidence" value="ECO:0000314"/>
    <property type="project" value="CAFA"/>
</dbReference>
<dbReference type="CDD" id="cd06624">
    <property type="entry name" value="STKc_ASK"/>
    <property type="match status" value="1"/>
</dbReference>
<dbReference type="FunFam" id="1.10.510.10:FF:000054">
    <property type="entry name" value="Mitogen-activated protein kinase kinase kinase 5"/>
    <property type="match status" value="1"/>
</dbReference>
<dbReference type="FunFam" id="3.30.200.20:FF:000067">
    <property type="entry name" value="Mitogen-activated protein kinase kinase kinase 5"/>
    <property type="match status" value="1"/>
</dbReference>
<dbReference type="Gene3D" id="3.30.200.20">
    <property type="entry name" value="Phosphorylase Kinase, domain 1"/>
    <property type="match status" value="1"/>
</dbReference>
<dbReference type="Gene3D" id="1.10.510.10">
    <property type="entry name" value="Transferase(Phosphotransferase) domain 1"/>
    <property type="match status" value="1"/>
</dbReference>
<dbReference type="InterPro" id="IPR046872">
    <property type="entry name" value="DRHyd-ASK"/>
</dbReference>
<dbReference type="InterPro" id="IPR046873">
    <property type="entry name" value="HisK-N-like"/>
</dbReference>
<dbReference type="InterPro" id="IPR011009">
    <property type="entry name" value="Kinase-like_dom_sf"/>
</dbReference>
<dbReference type="InterPro" id="IPR043969">
    <property type="entry name" value="MAP3K_PH"/>
</dbReference>
<dbReference type="InterPro" id="IPR025136">
    <property type="entry name" value="MAP3K_TRAF-bd"/>
</dbReference>
<dbReference type="InterPro" id="IPR000719">
    <property type="entry name" value="Prot_kinase_dom"/>
</dbReference>
<dbReference type="InterPro" id="IPR017441">
    <property type="entry name" value="Protein_kinase_ATP_BS"/>
</dbReference>
<dbReference type="InterPro" id="IPR013761">
    <property type="entry name" value="SAM/pointed_sf"/>
</dbReference>
<dbReference type="InterPro" id="IPR008271">
    <property type="entry name" value="Ser/Thr_kinase_AS"/>
</dbReference>
<dbReference type="PANTHER" id="PTHR11584:SF332">
    <property type="entry name" value="MITOGEN-ACTIVATED PROTEIN KINASE KINASE KINASE 5"/>
    <property type="match status" value="1"/>
</dbReference>
<dbReference type="PANTHER" id="PTHR11584">
    <property type="entry name" value="SERINE/THREONINE PROTEIN KINASE"/>
    <property type="match status" value="1"/>
</dbReference>
<dbReference type="Pfam" id="PF19039">
    <property type="entry name" value="ASK_PH"/>
    <property type="match status" value="1"/>
</dbReference>
<dbReference type="Pfam" id="PF20309">
    <property type="entry name" value="DRHyd-ASK"/>
    <property type="match status" value="1"/>
</dbReference>
<dbReference type="Pfam" id="PF20302">
    <property type="entry name" value="HisK-N-like"/>
    <property type="match status" value="1"/>
</dbReference>
<dbReference type="Pfam" id="PF13281">
    <property type="entry name" value="MAP3K_TRAF_bd"/>
    <property type="match status" value="1"/>
</dbReference>
<dbReference type="Pfam" id="PF00069">
    <property type="entry name" value="Pkinase"/>
    <property type="match status" value="1"/>
</dbReference>
<dbReference type="SMART" id="SM00220">
    <property type="entry name" value="S_TKc"/>
    <property type="match status" value="1"/>
</dbReference>
<dbReference type="SUPFAM" id="SSF56112">
    <property type="entry name" value="Protein kinase-like (PK-like)"/>
    <property type="match status" value="1"/>
</dbReference>
<dbReference type="SUPFAM" id="SSF47769">
    <property type="entry name" value="SAM/Pointed domain"/>
    <property type="match status" value="1"/>
</dbReference>
<dbReference type="PROSITE" id="PS00107">
    <property type="entry name" value="PROTEIN_KINASE_ATP"/>
    <property type="match status" value="1"/>
</dbReference>
<dbReference type="PROSITE" id="PS50011">
    <property type="entry name" value="PROTEIN_KINASE_DOM"/>
    <property type="match status" value="1"/>
</dbReference>
<dbReference type="PROSITE" id="PS00108">
    <property type="entry name" value="PROTEIN_KINASE_ST"/>
    <property type="match status" value="1"/>
</dbReference>
<comment type="function">
    <text evidence="6 7 8 9 11 14 15 19 20 21 26 29 41 43 45 46 47 49">Serine/threonine kinase which acts as an essential component of the MAP kinase signal transduction pathway. Plays an important role in the cascades of cellular responses evoked by changes in the environment. Mediates signaling for determination of cell fate such as differentiation and survival. Plays a crucial role in the apoptosis signal transduction pathway through mitochondria-dependent caspase activation. MAP3K5/ASK1 is required for the innate immune response, which is essential for host defense against a wide range of pathogens. Mediates signal transduction of various stressors like oxidative stress as well as by receptor-mediated inflammatory signals, such as the tumor necrosis factor (TNF) or lipopolysaccharide (LPS). Once activated, acts as an upstream activator of the MKK/JNK signal transduction cascade and the p38 MAPK signal transduction cascade through the phosphorylation and activation of several MAP kinase kinases like MAP2K4/SEK1, MAP2K3/MKK3, MAP2K6/MKK6 and MAP2K7/MKK7. These MAP2Ks in turn activate p38 MAPKs and c-jun N-terminal kinases (JNKs). Both p38 MAPK and JNKs control the transcription factors activator protein-1 (AP-1).</text>
</comment>
<comment type="catalytic activity">
    <reaction evidence="43">
        <text>L-seryl-[protein] + ATP = O-phospho-L-seryl-[protein] + ADP + H(+)</text>
        <dbReference type="Rhea" id="RHEA:17989"/>
        <dbReference type="Rhea" id="RHEA-COMP:9863"/>
        <dbReference type="Rhea" id="RHEA-COMP:11604"/>
        <dbReference type="ChEBI" id="CHEBI:15378"/>
        <dbReference type="ChEBI" id="CHEBI:29999"/>
        <dbReference type="ChEBI" id="CHEBI:30616"/>
        <dbReference type="ChEBI" id="CHEBI:83421"/>
        <dbReference type="ChEBI" id="CHEBI:456216"/>
        <dbReference type="EC" id="2.7.11.25"/>
    </reaction>
</comment>
<comment type="catalytic activity">
    <reaction evidence="43">
        <text>L-threonyl-[protein] + ATP = O-phospho-L-threonyl-[protein] + ADP + H(+)</text>
        <dbReference type="Rhea" id="RHEA:46608"/>
        <dbReference type="Rhea" id="RHEA-COMP:11060"/>
        <dbReference type="Rhea" id="RHEA-COMP:11605"/>
        <dbReference type="ChEBI" id="CHEBI:15378"/>
        <dbReference type="ChEBI" id="CHEBI:30013"/>
        <dbReference type="ChEBI" id="CHEBI:30616"/>
        <dbReference type="ChEBI" id="CHEBI:61977"/>
        <dbReference type="ChEBI" id="CHEBI:456216"/>
        <dbReference type="EC" id="2.7.11.25"/>
    </reaction>
</comment>
<comment type="cofactor">
    <cofactor>
        <name>Mg(2+)</name>
        <dbReference type="ChEBI" id="CHEBI:18420"/>
    </cofactor>
</comment>
<comment type="activity regulation">
    <text evidence="6 7 11 14 15 16 19 20 22 27 28 42 43 47 49">Activated by various stressors, including oxidative stress, endoplasmic reticulum stress, and calcium overload, as well as by receptor-mediated inflammatory signals, such as the tumor necrosis factor (TNF) and lipopolysaccharide (LPS). Homophilic association of MAP3K5/ASK1 through the C-terminal coiled-coil domains and the heteromeric complex formation of MAP3K5/ASK1 with the reduced form of thioredoxin (TXN), constitutes an inactive form of the kinase (PubMed:17210579, PubMed:9564042). Upon ROS-induced dissociation of TXN from MAP3K5/ASK1, TRAF2 and TRAF6 are reciprocally recruited to MAP3K5/ASK1 and form the active MAP3K5/ASK1 signalosome, in which TRAF2 and TRAF6 appear to facilitate the active configuration of MAP3K5/ASK1 (PubMed:10688666, PubMed:11920685, PubMed:9774977). MAP3K5/ASK1 activity is also regulated through several phosphorylation and dephosphorylation events. Thr-838 is an activating phosphorylation site that is autophosphorylated and phosphorylated by MAP3K6/ASK2 and dephosphorylated by PPP5C (PubMed:11689443). Ser-83 and Ser-1033 are inactivating phosphorylation sites, the former of which is phosphorylated by AKT1 (PubMed:11154276, PubMed:15094778). Phosphorylation of Ser-966 induces association of MAP3K5/ASK1 with the 14-3-3 family proteins, which suppresses MAP3K5/ASK1 activity (PubMed:10411906, PubMed:14688258). Calcium/calmodulin-activated protein phosphatase calcineurin (PPP3CA) has been shown to directly dephosphorylate this site (PubMed:14749717). SOCS1 binds to ASK1 by recognizing phosphorylation of Tyr-718 and induces MAP3K5/ASK1 degradation in endothelial cells (PubMed:16407264). Also dephosphorylated and activated by PGAM5. Contains an N-terminal autoinhibitory domain. Once activated targeted for proteasomal degradation by RC3H2-mediated ubiquitination (PubMed:24448648).</text>
</comment>
<comment type="subunit">
    <text evidence="1 6 7 10 13 14 16 18 20 21 22 23 24 25 26 27 28 29 31 32 33 35 37 38 39 40 42 43 44 47 48 49">Homodimer when inactive. Binds both upstream activators and downstream substrates in multimolecular complexes. Part of a cytoplasmic complex made of HIPK1, DAB2IP and MAP3K5 in response to TNF (PubMed:15310755, PubMed:15701637, PubMed:17210579, PubMed:17389591). This complex formation promotes MAP3K5-JNK activation and subsequent apoptosis. Interacts with SOCS1 which recognizes phosphorylation of Tyr-718 and induces MAP3K5/ASK1 degradation in endothelial cells. Interacts with the 14-3-3 family proteins such as YWHAB, YWHAE, YWHAQ, YWHAH, YWHAZ and SFN (PubMed:10411906, PubMed:15023544, PubMed:15094778). Interacts with ARRB2, BIRC2, DAB2IP, IGF1R, MAP3K6/ASK2, PGAM5, PIM1, PPP5C, SOCS1, STUB1, TRAF2, TRAF6 and TXN (PubMed:10688666, PubMed:11090355, PubMed:11689443, PubMed:12556535, PubMed:12813029, PubMed:15310755, PubMed:16038411, PubMed:16129676, PubMed:16407264, PubMed:17220297, PubMed:17724081, PubMed:18408005, PubMed:19590015, PubMed:19749799, PubMed:9564042, PubMed:9774977). Interacts with ERN1 in a TRAF2-dependent manner (PubMed:14749717). Interacts with calcineurin subunit PPP3R1 (By similarity). Interacts with PPM1L (PubMed:17456047). Interacts (via N-terminus) with RAF1 and this interaction inhibits the proapoptotic function of MAP3K5 (PubMed:11427728). Interacts with DAB2IP (via N-terminus C2 domain); the interaction occurs in a TNF-alpha-dependent manner (PubMed:15310755). Interacts with DUSP13A; may positively regulate apoptosis (PubMed:20358250). Interacts with DAXX (PubMed:9743501). Interacts with RC3H2 (PubMed:24448648). Interacts with PPIA/CYPA (PubMed:26095851). Interacts with PRMT1; the interaction results in MAP3K5 methylation by PRMT1 which inhibits MAP3K5 activation (PubMed:22095282). Interacts with TRAF2; the interaction is inhibited by PRMT1 (PubMed:22095282). Interacts with TRIM48 (PubMed:29186683).</text>
</comment>
<comment type="subunit">
    <text evidence="12">(Microbial infection) Interacts with HIV-1 Nef; this interaction inhibits MAP3K5 signaling.</text>
</comment>
<comment type="interaction">
    <interactant intactId="EBI-476263">
        <id>Q99683</id>
    </interactant>
    <interactant intactId="EBI-296087">
        <id>P31749</id>
        <label>AKT1</label>
    </interactant>
    <organismsDiffer>false</organismsDiffer>
    <experiments>2</experiments>
</comment>
<comment type="interaction">
    <interactant intactId="EBI-476263">
        <id>Q99683</id>
    </interactant>
    <interactant intactId="EBI-743313">
        <id>P49407</id>
        <label>ARRB1</label>
    </interactant>
    <organismsDiffer>false</organismsDiffer>
    <experiments>3</experiments>
</comment>
<comment type="interaction">
    <interactant intactId="EBI-476263">
        <id>Q99683</id>
    </interactant>
    <interactant intactId="EBI-714559">
        <id>P32121</id>
        <label>ARRB2</label>
    </interactant>
    <organismsDiffer>false</organismsDiffer>
    <experiments>2</experiments>
</comment>
<comment type="interaction">
    <interactant intactId="EBI-476263">
        <id>Q99683</id>
    </interactant>
    <interactant intactId="EBI-372594">
        <id>Q99828</id>
        <label>CIB1</label>
    </interactant>
    <organismsDiffer>false</organismsDiffer>
    <experiments>7</experiments>
</comment>
<comment type="interaction">
    <interactant intactId="EBI-476263">
        <id>Q99683</id>
    </interactant>
    <interactant intactId="EBI-6875961">
        <id>P02489</id>
        <label>CRYAA</label>
    </interactant>
    <organismsDiffer>false</organismsDiffer>
    <experiments>3</experiments>
</comment>
<comment type="interaction">
    <interactant intactId="EBI-476263">
        <id>Q99683</id>
    </interactant>
    <interactant intactId="EBI-2871881">
        <id>Q5VWQ8</id>
        <label>DAB2IP</label>
    </interactant>
    <organismsDiffer>false</organismsDiffer>
    <experiments>2</experiments>
</comment>
<comment type="interaction">
    <interactant intactId="EBI-476263">
        <id>Q99683</id>
    </interactant>
    <interactant intactId="EBI-77321">
        <id>Q9UER7</id>
        <label>DAXX</label>
    </interactant>
    <organismsDiffer>false</organismsDiffer>
    <experiments>7</experiments>
</comment>
<comment type="interaction">
    <interactant intactId="EBI-476263">
        <id>Q99683</id>
    </interactant>
    <interactant intactId="EBI-10968534">
        <id>P50570-2</id>
        <label>DNM2</label>
    </interactant>
    <organismsDiffer>false</organismsDiffer>
    <experiments>3</experiments>
</comment>
<comment type="interaction">
    <interactant intactId="EBI-476263">
        <id>Q99683</id>
    </interactant>
    <interactant intactId="EBI-356015">
        <id>Q14204</id>
        <label>DYNC1H1</label>
    </interactant>
    <organismsDiffer>false</organismsDiffer>
    <experiments>3</experiments>
</comment>
<comment type="interaction">
    <interactant intactId="EBI-476263">
        <id>Q99683</id>
    </interactant>
    <interactant intactId="EBI-711977">
        <id>P20042</id>
        <label>EIF2S2</label>
    </interactant>
    <organismsDiffer>false</organismsDiffer>
    <experiments>3</experiments>
</comment>
<comment type="interaction">
    <interactant intactId="EBI-476263">
        <id>Q99683</id>
    </interactant>
    <interactant intactId="EBI-1054228">
        <id>P41091</id>
        <label>EIF2S3</label>
    </interactant>
    <organismsDiffer>false</organismsDiffer>
    <experiments>3</experiments>
</comment>
<comment type="interaction">
    <interactant intactId="EBI-476263">
        <id>Q99683</id>
    </interactant>
    <interactant intactId="EBI-10226858">
        <id>Q0VDC6</id>
        <label>FKBP1A</label>
    </interactant>
    <organismsDiffer>false</organismsDiffer>
    <experiments>3</experiments>
</comment>
<comment type="interaction">
    <interactant intactId="EBI-476263">
        <id>Q99683</id>
    </interactant>
    <interactant intactId="EBI-11110431">
        <id>Q8TB36</id>
        <label>GDAP1</label>
    </interactant>
    <organismsDiffer>false</organismsDiffer>
    <experiments>3</experiments>
</comment>
<comment type="interaction">
    <interactant intactId="EBI-476263">
        <id>Q99683</id>
    </interactant>
    <interactant intactId="EBI-747754">
        <id>P28799</id>
        <label>GRN</label>
    </interactant>
    <organismsDiffer>false</organismsDiffer>
    <experiments>3</experiments>
</comment>
<comment type="interaction">
    <interactant intactId="EBI-476263">
        <id>Q99683</id>
    </interactant>
    <interactant intactId="EBI-356991">
        <id>P54652</id>
        <label>HSPA2</label>
    </interactant>
    <organismsDiffer>false</organismsDiffer>
    <experiments>3</experiments>
</comment>
<comment type="interaction">
    <interactant intactId="EBI-476263">
        <id>Q99683</id>
    </interactant>
    <interactant intactId="EBI-352682">
        <id>P04792</id>
        <label>HSPB1</label>
    </interactant>
    <organismsDiffer>false</organismsDiffer>
    <experiments>3</experiments>
</comment>
<comment type="interaction">
    <interactant intactId="EBI-476263">
        <id>Q99683</id>
    </interactant>
    <interactant intactId="EBI-517086">
        <id>O43464</id>
        <label>HTRA2</label>
    </interactant>
    <organismsDiffer>false</organismsDiffer>
    <experiments>3</experiments>
</comment>
<comment type="interaction">
    <interactant intactId="EBI-476263">
        <id>Q99683</id>
    </interactant>
    <interactant intactId="EBI-466029">
        <id>P42858</id>
        <label>HTT</label>
    </interactant>
    <organismsDiffer>false</organismsDiffer>
    <experiments>6</experiments>
</comment>
<comment type="interaction">
    <interactant intactId="EBI-476263">
        <id>Q99683</id>
    </interactant>
    <interactant intactId="EBI-10975473">
        <id>O60333-2</id>
        <label>KIF1B</label>
    </interactant>
    <organismsDiffer>false</organismsDiffer>
    <experiments>3</experiments>
</comment>
<comment type="interaction">
    <interactant intactId="EBI-476263">
        <id>Q99683</id>
    </interactant>
    <interactant intactId="EBI-2432309">
        <id>Q92876</id>
        <label>KLK6</label>
    </interactant>
    <organismsDiffer>false</organismsDiffer>
    <experiments>3</experiments>
</comment>
<comment type="interaction">
    <interactant intactId="EBI-476263">
        <id>Q99683</id>
    </interactant>
    <interactant intactId="EBI-25832196">
        <id>Q14114-3</id>
        <label>LRP8</label>
    </interactant>
    <organismsDiffer>false</organismsDiffer>
    <experiments>3</experiments>
</comment>
<comment type="interaction">
    <interactant intactId="EBI-476263">
        <id>Q99683</id>
    </interactant>
    <interactant intactId="EBI-602462">
        <id>P46734</id>
        <label>MAP2K3</label>
    </interactant>
    <organismsDiffer>false</organismsDiffer>
    <experiments>6</experiments>
</comment>
<comment type="interaction">
    <interactant intactId="EBI-476263">
        <id>Q99683</id>
    </interactant>
    <interactant intactId="EBI-476263">
        <id>Q99683</id>
        <label>MAP3K5</label>
    </interactant>
    <organismsDiffer>false</organismsDiffer>
    <experiments>5</experiments>
</comment>
<comment type="interaction">
    <interactant intactId="EBI-476263">
        <id>Q99683</id>
    </interactant>
    <interactant intactId="EBI-348259">
        <id>Q96EZ8</id>
        <label>MCRS1</label>
    </interactant>
    <organismsDiffer>false</organismsDiffer>
    <experiments>3</experiments>
</comment>
<comment type="interaction">
    <interactant intactId="EBI-476263">
        <id>Q99683</id>
    </interactant>
    <interactant intactId="EBI-713608">
        <id>Q96HS1</id>
        <label>PGAM5</label>
    </interactant>
    <organismsDiffer>false</organismsDiffer>
    <experiments>2</experiments>
</comment>
<comment type="interaction">
    <interactant intactId="EBI-476263">
        <id>Q99683</id>
    </interactant>
    <interactant intactId="EBI-915984">
        <id>P63098</id>
        <label>PPP3R1</label>
    </interactant>
    <organismsDiffer>false</organismsDiffer>
    <experiments>2</experiments>
</comment>
<comment type="interaction">
    <interactant intactId="EBI-476263">
        <id>Q99683</id>
    </interactant>
    <interactant intactId="EBI-749195">
        <id>P60891</id>
        <label>PRPS1</label>
    </interactant>
    <organismsDiffer>false</organismsDiffer>
    <experiments>3</experiments>
</comment>
<comment type="interaction">
    <interactant intactId="EBI-476263">
        <id>Q99683</id>
    </interactant>
    <interactant intactId="EBI-395421">
        <id>Q16637</id>
        <label>SMN2</label>
    </interactant>
    <organismsDiffer>false</organismsDiffer>
    <experiments>3</experiments>
</comment>
<comment type="interaction">
    <interactant intactId="EBI-476263">
        <id>Q99683</id>
    </interactant>
    <interactant intactId="EBI-355744">
        <id>Q12933</id>
        <label>TRAF2</label>
    </interactant>
    <organismsDiffer>false</organismsDiffer>
    <experiments>4</experiments>
</comment>
<comment type="interaction">
    <interactant intactId="EBI-476263">
        <id>Q99683</id>
    </interactant>
    <interactant intactId="EBI-594644">
        <id>P10599</id>
        <label>TXN</label>
    </interactant>
    <organismsDiffer>false</organismsDiffer>
    <experiments>4</experiments>
</comment>
<comment type="interaction">
    <interactant intactId="EBI-476263">
        <id>Q99683</id>
    </interactant>
    <interactant intactId="EBI-11141397">
        <id>Q9UBQ0-2</id>
        <label>VPS29</label>
    </interactant>
    <organismsDiffer>false</organismsDiffer>
    <experiments>3</experiments>
</comment>
<comment type="interaction">
    <interactant intactId="EBI-476263">
        <id>Q99683</id>
    </interactant>
    <interactant intactId="EBI-359815">
        <id>P31946</id>
        <label>YWHAB</label>
    </interactant>
    <organismsDiffer>false</organismsDiffer>
    <experiments>4</experiments>
</comment>
<comment type="interaction">
    <interactant intactId="EBI-476263">
        <id>Q99683</id>
    </interactant>
    <interactant intactId="EBI-356498">
        <id>P62258</id>
        <label>YWHAE</label>
    </interactant>
    <organismsDiffer>false</organismsDiffer>
    <experiments>3</experiments>
</comment>
<comment type="interaction">
    <interactant intactId="EBI-476263">
        <id>Q99683</id>
    </interactant>
    <interactant intactId="EBI-359832">
        <id>P61981</id>
        <label>YWHAG</label>
    </interactant>
    <organismsDiffer>false</organismsDiffer>
    <experiments>4</experiments>
</comment>
<comment type="interaction">
    <interactant intactId="EBI-476263">
        <id>Q99683</id>
    </interactant>
    <interactant intactId="EBI-306940">
        <id>Q04917</id>
        <label>YWHAH</label>
    </interactant>
    <organismsDiffer>false</organismsDiffer>
    <experiments>4</experiments>
</comment>
<comment type="interaction">
    <interactant intactId="EBI-476263">
        <id>Q99683</id>
    </interactant>
    <interactant intactId="EBI-347088">
        <id>P63104</id>
        <label>YWHAZ</label>
    </interactant>
    <organismsDiffer>false</organismsDiffer>
    <experiments>5</experiments>
</comment>
<comment type="interaction">
    <interactant intactId="EBI-476263">
        <id>Q99683</id>
    </interactant>
    <interactant intactId="EBI-2687480">
        <id>Q969S3</id>
        <label>ZNF622</label>
    </interactant>
    <organismsDiffer>false</organismsDiffer>
    <experiments>14</experiments>
</comment>
<comment type="interaction">
    <interactant intactId="EBI-476263">
        <id>Q99683</id>
    </interactant>
    <interactant intactId="EBI-1254790">
        <id>Q9WTR2</id>
        <label>Map3k6</label>
    </interactant>
    <organismsDiffer>true</organismsDiffer>
    <experiments>3</experiments>
</comment>
<comment type="interaction">
    <interactant intactId="EBI-476263">
        <id>Q99683</id>
    </interactant>
    <interactant intactId="EBI-309205">
        <id>Q9D1C8</id>
        <label>Vps28</label>
    </interactant>
    <organismsDiffer>true</organismsDiffer>
    <experiments>5</experiments>
</comment>
<comment type="subcellular location">
    <subcellularLocation>
        <location evidence="43">Cytoplasm</location>
    </subcellularLocation>
    <subcellularLocation>
        <location>Endoplasmic reticulum</location>
    </subcellularLocation>
    <text>Interaction with 14-3-3 proteins alters the distribution of MAP3K5/ASK1 and restricts it to the perinuclear endoplasmic reticulum region.</text>
</comment>
<comment type="alternative products">
    <event type="alternative splicing"/>
    <isoform>
        <id>Q99683-1</id>
        <name>1</name>
        <sequence type="displayed"/>
    </isoform>
    <isoform>
        <id>Q99683-2</id>
        <name>2</name>
        <sequence type="described" ref="VSP_056182"/>
    </isoform>
</comment>
<comment type="tissue specificity">
    <text>Abundantly expressed in heart and pancreas.</text>
</comment>
<comment type="induction">
    <text>By TNF. Inhibited by HIV-1 Nef.</text>
</comment>
<comment type="PTM">
    <text evidence="11 15 16 19 22 27 28 34 36 37 38 41 43">Phosphorylated at Thr-838 through autophosphorylation and by MAP3K6/ASK2 which leads to activation. Thr-838 is dephosphorylated by PPP5C. Ser-83 and Ser-1033 are inactivating phosphorylation sites, the former of which is phosphorylated by AKT1. Phosphorylated at Ser-966 which induces association of MAP3K5/ASK1 with the 14-3-3 family proteins and suppresses MAP3K5/ASK1 activity. Calcineurin (CN) dephosphorylates this site. Also dephosphorylated and activated by PGAM5. Phosphorylation at Ser-966 in response to oxidative stress is negatively regulated by PPIA/CYPA (PubMed:26095851).</text>
</comment>
<comment type="PTM">
    <text evidence="25 29 44">Ubiquitinated (PubMed:16038411, PubMed:17220297, PubMed:29186683). Tumor necrosis factor (TNF) induces TNFR2-dependent ubiquitination, leading to proteasomal degradation (PubMed:17220297). Ubiquitinated by RC3H2 in a TRIM48-dependent manner (PubMed:29186683).</text>
</comment>
<comment type="PTM">
    <text evidence="40 44">Methylation at Arg-78 and Arg-80 by PRMT1 promotes association of MAP3K5 with thioredoxin and negatively regulates MAP3K5 association with TRAF2, inhibiting MAP3K5 activation (PubMed:22095282). Methylation is blocked by ubiquitination of PRMT1 by TRIM48 (PubMed:29186683).</text>
</comment>
<comment type="similarity">
    <text evidence="51">Belongs to the protein kinase superfamily. STE Ser/Thr protein kinase family. MAP kinase kinase kinase subfamily.</text>
</comment>
<comment type="caution">
    <text evidence="17 52">Reported to be phosphorylated by AKT2 (PubMed:12697749). However, the publication has been retracted due to image duplication in figures.</text>
</comment>
<accession>Q99683</accession>
<accession>A6NIA0</accession>
<accession>B4DGB2</accession>
<accession>Q5THN3</accession>
<accession>Q99461</accession>